<keyword id="KW-0002">3D-structure</keyword>
<keyword id="KW-0131">Cell cycle</keyword>
<keyword id="KW-0132">Cell division</keyword>
<keyword id="KW-0227">DNA damage</keyword>
<keyword id="KW-0234">DNA repair</keyword>
<keyword id="KW-0378">Hydrolase</keyword>
<keyword id="KW-1017">Isopeptide bond</keyword>
<keyword id="KW-0479">Metal-binding</keyword>
<keyword id="KW-0498">Mitosis</keyword>
<keyword id="KW-0539">Nucleus</keyword>
<keyword id="KW-0597">Phosphoprotein</keyword>
<keyword id="KW-1267">Proteomics identification</keyword>
<keyword id="KW-1185">Reference proteome</keyword>
<keyword id="KW-0832">Ubl conjugation</keyword>
<keyword id="KW-0862">Zinc</keyword>
<keyword id="KW-0863">Zinc-finger</keyword>
<sequence>MLEDISEEDIWEYKSKRKPKRVDPNNGSKNILKSVEKATDGKYQSKRSRNRKRAAEAKEVKDHEVPLGNAGCQTSVASSQNSSCGDGIQQTQDKETTPGKLCRTQKSQHVSPKIRPVYDGYCPNCQMPFSSLIGQTPRWHVFECLDSPPRSETECPDGLLCTSTIPFHYKRYTHFLLAQSRAGDHPFSSPSPASGGSFSETKSGVLCSLEERWSSYQNQTDNSVSNDPLLMTQYFKKSPSLTEASEKISTHIQTSQQALQFTDFVENDKLVGVALRLANNSEHINLPLPENDFSDCEISYSPLQSDEDTHDIDEKPDDSQEQLFFTESSKDGSLEEDDDSCGFFKKRHGPLLKDQDESCPKVNSFLTRDKYDEGLYRFNSLNDLSQPISQNNESTLPYDLACTGGDFVLFPPALAGKLAASVHQATKAKPDEPEFHSAQSNKQKQVIEESSVYNQVSLPLVKSLMLKPFESQVEGYLSSQPTQNTIRKLSSENLNAKNNTNSACFCRKALEGVPVGKATILNTENLSSTPAPKYLKILPSGLKYNARHPSTKVMKQMDIGVYFGLPPKRKEEKLLGESALEGINLNPVPSPNQKRSSQCKRKAEKSLSDLEFDASTLHESQLSVELSSERSQRQKKRCRKSNSLQEGACQKRSDHLINTESEAVNLSKVKVFTKSAHGGLQRGNKKIPESSNVGGSRKKTCPFYKKIPGTGFTVDAFQYGVVEGCTAYFLTHFHSDHYAGLSKHFTFPVYCSEITGNLLKNKLHVQEQYIHPLPLDTECIVNGVKVVLLDANHCPGAVMILFYLPNGTVILHTGDFRADPSMERSLLADQKVHMLYLDTTYCSPEYTFPSQQEVIRFAINTAFEAVTLNPHALVVCGTYSIGKEKVFLAIADVLGSKVGMSQEKYKTLQCLNIPEINSLITTDMCSSLVHLLPMMQINFKGLQSHLKKCGGKYNQILAFRPTGWTHSNKFTRIADVIPQTKGNISIYGIPYSEHSSYLEMKRFVQWLKPQKIIPTVNVGTWKSRSTMEKYFREWKLEAGY</sequence>
<proteinExistence type="evidence at protein level"/>
<organism>
    <name type="scientific">Homo sapiens</name>
    <name type="common">Human</name>
    <dbReference type="NCBI Taxonomy" id="9606"/>
    <lineage>
        <taxon>Eukaryota</taxon>
        <taxon>Metazoa</taxon>
        <taxon>Chordata</taxon>
        <taxon>Craniata</taxon>
        <taxon>Vertebrata</taxon>
        <taxon>Euteleostomi</taxon>
        <taxon>Mammalia</taxon>
        <taxon>Eutheria</taxon>
        <taxon>Euarchontoglires</taxon>
        <taxon>Primates</taxon>
        <taxon>Haplorrhini</taxon>
        <taxon>Catarrhini</taxon>
        <taxon>Hominidae</taxon>
        <taxon>Homo</taxon>
    </lineage>
</organism>
<feature type="chain" id="PRO_0000209116" description="DNA cross-link repair 1A protein">
    <location>
        <begin position="1"/>
        <end position="1040"/>
    </location>
</feature>
<feature type="zinc finger region" description="UBZ4-type" evidence="2">
    <location>
        <begin position="119"/>
        <end position="149"/>
    </location>
</feature>
<feature type="region of interest" description="Nuclear localization region">
    <location>
        <begin position="1"/>
        <end position="190"/>
    </location>
</feature>
<feature type="region of interest" description="Disordered" evidence="3">
    <location>
        <begin position="15"/>
        <end position="76"/>
    </location>
</feature>
<feature type="region of interest" description="Nuclear focus formation">
    <location>
        <begin position="396"/>
        <end position="614"/>
    </location>
</feature>
<feature type="region of interest" description="Disordered" evidence="3">
    <location>
        <begin position="582"/>
        <end position="602"/>
    </location>
</feature>
<feature type="region of interest" description="Disordered" evidence="3">
    <location>
        <begin position="623"/>
        <end position="651"/>
    </location>
</feature>
<feature type="compositionally biased region" description="Basic and acidic residues" evidence="3">
    <location>
        <begin position="53"/>
        <end position="65"/>
    </location>
</feature>
<feature type="binding site" evidence="2">
    <location>
        <position position="122"/>
    </location>
    <ligand>
        <name>Zn(2+)</name>
        <dbReference type="ChEBI" id="CHEBI:29105"/>
    </ligand>
</feature>
<feature type="binding site" evidence="2">
    <location>
        <position position="125"/>
    </location>
    <ligand>
        <name>Zn(2+)</name>
        <dbReference type="ChEBI" id="CHEBI:29105"/>
    </ligand>
</feature>
<feature type="binding site" evidence="2">
    <location>
        <position position="140"/>
    </location>
    <ligand>
        <name>Zn(2+)</name>
        <dbReference type="ChEBI" id="CHEBI:29105"/>
    </ligand>
</feature>
<feature type="binding site" evidence="2">
    <location>
        <position position="144"/>
    </location>
    <ligand>
        <name>Zn(2+)</name>
        <dbReference type="ChEBI" id="CHEBI:29105"/>
    </ligand>
</feature>
<feature type="modified residue" description="Phosphoserine" evidence="1">
    <location>
        <position position="590"/>
    </location>
</feature>
<feature type="cross-link" description="Glycyl lysine isopeptide (Lys-Gly) (interchain with G-Cter in SUMO2)" evidence="15">
    <location>
        <position position="202"/>
    </location>
</feature>
<feature type="cross-link" description="Glycyl lysine isopeptide (Lys-Gly) (interchain with G-Cter in SUMO2)" evidence="15">
    <location>
        <position position="236"/>
    </location>
</feature>
<feature type="cross-link" description="Glycyl lysine isopeptide (Lys-Gly) (interchain with G-Cter in SUMO2)" evidence="15">
    <location>
        <position position="269"/>
    </location>
</feature>
<feature type="cross-link" description="Glycyl lysine isopeptide (Lys-Gly) (interchain with G-Cter in SUMO2)" evidence="15">
    <location>
        <position position="353"/>
    </location>
</feature>
<feature type="cross-link" description="Glycyl lysine isopeptide (Lys-Gly) (interchain with G-Cter in SUMO2)" evidence="15">
    <location>
        <position position="361"/>
    </location>
</feature>
<feature type="cross-link" description="Glycyl lysine isopeptide (Lys-Gly) (interchain with G-Cter in SUMO2)" evidence="15">
    <location>
        <position position="429"/>
    </location>
</feature>
<feature type="cross-link" description="Glycyl lysine isopeptide (Lys-Gly) (interchain with G-Cter in SUMO2)" evidence="14 15">
    <location>
        <position position="488"/>
    </location>
</feature>
<feature type="cross-link" description="Glycyl lysine isopeptide (Lys-Gly) (interchain with G-Cter in SUMO2)" evidence="15">
    <location>
        <position position="508"/>
    </location>
</feature>
<feature type="cross-link" description="Glycyl lysine isopeptide (Lys-Gly) (interchain with G-Cter in SUMO2)" evidence="15">
    <location>
        <position position="517"/>
    </location>
</feature>
<feature type="cross-link" description="Glycyl lysine isopeptide (Lys-Gly) (interchain with G-Cter in SUMO2)" evidence="15">
    <location>
        <position position="533"/>
    </location>
</feature>
<feature type="cross-link" description="Glycyl lysine isopeptide (Lys-Gly) (interchain with G-Cter in SUMO2)" evidence="15">
    <location>
        <position position="536"/>
    </location>
</feature>
<feature type="cross-link" description="Glycyl lysine isopeptide (Lys-Gly) (interchain with G-Cter in SUMO2)" evidence="15">
    <location>
        <position position="668"/>
    </location>
</feature>
<feature type="cross-link" description="Glycyl lysine isopeptide (Lys-Gly) (interchain with G-Cter in SUMO2)" evidence="15">
    <location>
        <position position="670"/>
    </location>
</feature>
<feature type="cross-link" description="Glycyl lysine isopeptide (Lys-Gly) (interchain with G-Cter in SUMO2)" evidence="15">
    <location>
        <position position="674"/>
    </location>
</feature>
<feature type="sequence variant" id="VAR_023286" description="In dbSNP:rs17235066." evidence="11">
    <original>K</original>
    <variation>E</variation>
    <location>
        <position position="58"/>
    </location>
</feature>
<feature type="sequence variant" id="VAR_023287" description="In dbSNP:rs17228665." evidence="11">
    <original>E</original>
    <variation>D</variation>
    <location>
        <position position="59"/>
    </location>
</feature>
<feature type="sequence variant" id="VAR_023288" description="In dbSNP:rs17228672." evidence="11">
    <original>G</original>
    <variation>D</variation>
    <location>
        <position position="71"/>
    </location>
</feature>
<feature type="sequence variant" id="VAR_023289" description="In dbSNP:rs17235094." evidence="11">
    <original>P</original>
    <variation>L</variation>
    <location>
        <position position="287"/>
    </location>
</feature>
<feature type="sequence variant" id="VAR_023290" description="In dbSNP:rs3750898." evidence="7 11 12">
    <original>D</original>
    <variation>H</variation>
    <location>
        <position position="317"/>
    </location>
</feature>
<feature type="sequence variant" id="VAR_030574" description="In dbSNP:rs17855759." evidence="7">
    <original>G</original>
    <variation>W</variation>
    <location>
        <position position="582"/>
    </location>
</feature>
<feature type="sequence variant" id="VAR_023291" description="In dbSNP:rs11196530." evidence="11">
    <original>I</original>
    <variation>F</variation>
    <location>
        <position position="859"/>
    </location>
</feature>
<feature type="mutagenesis site" description="Impaired nuclear focus formation, reduced interaction with PIAS and increased sensitivity to cisplatin." evidence="9">
    <original>D</original>
    <variation>N</variation>
    <location>
        <position position="838"/>
    </location>
</feature>
<feature type="mutagenesis site" description="Impaired nuclear focus formation, reduced interaction with PIAS and increased sensitivity to cisplatin." evidence="9">
    <original>H</original>
    <variation>A</variation>
    <location>
        <position position="994"/>
    </location>
</feature>
<feature type="helix" evidence="16">
    <location>
        <begin position="703"/>
        <end position="705"/>
    </location>
</feature>
<feature type="turn" evidence="16">
    <location>
        <begin position="708"/>
        <end position="711"/>
    </location>
</feature>
<feature type="strand" evidence="16">
    <location>
        <begin position="712"/>
        <end position="715"/>
    </location>
</feature>
<feature type="strand" evidence="16">
    <location>
        <begin position="718"/>
        <end position="721"/>
    </location>
</feature>
<feature type="strand" evidence="16">
    <location>
        <begin position="726"/>
        <end position="729"/>
    </location>
</feature>
<feature type="helix" evidence="16">
    <location>
        <begin position="735"/>
        <end position="738"/>
    </location>
</feature>
<feature type="strand" evidence="16">
    <location>
        <begin position="749"/>
        <end position="751"/>
    </location>
</feature>
<feature type="helix" evidence="16">
    <location>
        <begin position="753"/>
        <end position="761"/>
    </location>
</feature>
<feature type="helix" evidence="16">
    <location>
        <begin position="767"/>
        <end position="769"/>
    </location>
</feature>
<feature type="strand" evidence="16">
    <location>
        <begin position="770"/>
        <end position="772"/>
    </location>
</feature>
<feature type="strand" evidence="17">
    <location>
        <begin position="775"/>
        <end position="777"/>
    </location>
</feature>
<feature type="strand" evidence="16">
    <location>
        <begin position="779"/>
        <end position="781"/>
    </location>
</feature>
<feature type="strand" evidence="16">
    <location>
        <begin position="784"/>
        <end position="790"/>
    </location>
</feature>
<feature type="strand" evidence="16">
    <location>
        <begin position="792"/>
        <end position="794"/>
    </location>
</feature>
<feature type="strand" evidence="16">
    <location>
        <begin position="798"/>
        <end position="803"/>
    </location>
</feature>
<feature type="strand" evidence="16">
    <location>
        <begin position="809"/>
        <end position="812"/>
    </location>
</feature>
<feature type="helix" evidence="16">
    <location>
        <begin position="820"/>
        <end position="824"/>
    </location>
</feature>
<feature type="turn" evidence="16">
    <location>
        <begin position="826"/>
        <end position="829"/>
    </location>
</feature>
<feature type="strand" evidence="16">
    <location>
        <begin position="833"/>
        <end position="837"/>
    </location>
</feature>
<feature type="helix" evidence="16">
    <location>
        <begin position="851"/>
        <end position="868"/>
    </location>
</feature>
<feature type="strand" evidence="16">
    <location>
        <begin position="872"/>
        <end position="881"/>
    </location>
</feature>
<feature type="helix" evidence="16">
    <location>
        <begin position="885"/>
        <end position="893"/>
    </location>
</feature>
<feature type="helix" evidence="16">
    <location>
        <begin position="902"/>
        <end position="909"/>
    </location>
</feature>
<feature type="turn" evidence="18">
    <location>
        <begin position="910"/>
        <end position="912"/>
    </location>
</feature>
<feature type="helix" evidence="16">
    <location>
        <begin position="916"/>
        <end position="918"/>
    </location>
</feature>
<feature type="strand" evidence="16">
    <location>
        <begin position="920"/>
        <end position="922"/>
    </location>
</feature>
<feature type="helix" evidence="16">
    <location>
        <begin position="924"/>
        <end position="926"/>
    </location>
</feature>
<feature type="strand" evidence="16">
    <location>
        <begin position="928"/>
        <end position="933"/>
    </location>
</feature>
<feature type="helix" evidence="16">
    <location>
        <begin position="934"/>
        <end position="936"/>
    </location>
</feature>
<feature type="helix" evidence="16">
    <location>
        <begin position="939"/>
        <end position="947"/>
    </location>
</feature>
<feature type="turn" evidence="16">
    <location>
        <begin position="948"/>
        <end position="951"/>
    </location>
</feature>
<feature type="strand" evidence="16">
    <location>
        <begin position="954"/>
        <end position="963"/>
    </location>
</feature>
<feature type="helix" evidence="16">
    <location>
        <begin position="966"/>
        <end position="969"/>
    </location>
</feature>
<feature type="helix" evidence="16">
    <location>
        <begin position="973"/>
        <end position="975"/>
    </location>
</feature>
<feature type="strand" evidence="16">
    <location>
        <begin position="979"/>
        <end position="981"/>
    </location>
</feature>
<feature type="strand" evidence="16">
    <location>
        <begin position="984"/>
        <end position="990"/>
    </location>
</feature>
<feature type="helix" evidence="16">
    <location>
        <begin position="997"/>
        <end position="1007"/>
    </location>
</feature>
<feature type="strand" evidence="16">
    <location>
        <begin position="1010"/>
        <end position="1014"/>
    </location>
</feature>
<feature type="helix" evidence="16">
    <location>
        <begin position="1021"/>
        <end position="1038"/>
    </location>
</feature>
<comment type="function">
    <text evidence="8">May be required for DNA interstrand cross-link repair. Also required for checkpoint mediated cell cycle arrest in early prophase in response to mitotic spindle poisons. Possesses beta-lactamase activity, catalyzing the hydrolysis of penicillin G and nitrocefin (PubMed:31434986). Exhibits no activity towards other beta-lactam antibiotic classes including cephalosporins (cefotaxime) and carbapenems (imipenem) (PubMed:31434986).</text>
</comment>
<comment type="catalytic activity">
    <reaction evidence="10">
        <text>a beta-lactam + H2O = a substituted beta-amino acid</text>
        <dbReference type="Rhea" id="RHEA:20401"/>
        <dbReference type="ChEBI" id="CHEBI:15377"/>
        <dbReference type="ChEBI" id="CHEBI:35627"/>
        <dbReference type="ChEBI" id="CHEBI:140347"/>
        <dbReference type="EC" id="3.5.2.6"/>
    </reaction>
</comment>
<comment type="activity regulation">
    <text evidence="10">Beta-lactamase activity is inhibited by sulbactam.</text>
</comment>
<comment type="subunit">
    <text>Binds constitutively to TP53BP1. Binds CDC27, which is itself a component of the anaphase promoting complex (APC). Binds PIAS1.</text>
</comment>
<comment type="subcellular location">
    <subcellularLocation>
        <location evidence="4 5 9">Nucleus</location>
    </subcellularLocation>
    <text>In some cells it may be found in typically 1 or 2 discrete nuclear aggregates of unknown function which also contain TP53BP1. Also found in multiple discrete nuclear foci which increase in number following treatment with ionizing radiation or interstrand cross-linking agents. These foci overlap with those formed by the MRN complex (composed of MRE11, RAD50 and NBN) and BRCA1.</text>
</comment>
<comment type="tissue specificity">
    <text evidence="5">Expressed in brain, heart, kidney, liver, pancreas, placenta and skeletal muscle.</text>
</comment>
<comment type="induction">
    <text evidence="6">During mitosis. The mRNA encoding this protein contains an internal ribosome entry site (IRES) in its 5'-UTR. This 5'-UTR generally suppresses translation while specifically promoting expression during mitosis, when cap-dependent translation may be impaired.</text>
</comment>
<comment type="similarity">
    <text evidence="13">Belongs to the DNA repair metallo-beta-lactamase (DRMBL) family.</text>
</comment>
<comment type="sequence caution" evidence="13">
    <conflict type="erroneous initiation">
        <sequence resource="EMBL-CDS" id="BAA07646"/>
    </conflict>
    <text>Extended N-terminus.</text>
</comment>
<accession>Q6PJP8</accession>
<accession>D3DRC1</accession>
<accession>Q14701</accession>
<accession>Q6P5Y3</accession>
<accession>Q6PKL4</accession>
<dbReference type="EC" id="3.5.2.6" evidence="10"/>
<dbReference type="EMBL" id="D42045">
    <property type="protein sequence ID" value="BAA07646.2"/>
    <property type="status" value="ALT_INIT"/>
    <property type="molecule type" value="mRNA"/>
</dbReference>
<dbReference type="EMBL" id="AY607842">
    <property type="protein sequence ID" value="AAT09762.1"/>
    <property type="molecule type" value="Genomic_DNA"/>
</dbReference>
<dbReference type="EMBL" id="AL592546">
    <property type="status" value="NOT_ANNOTATED_CDS"/>
    <property type="molecule type" value="Genomic_DNA"/>
</dbReference>
<dbReference type="EMBL" id="CH471066">
    <property type="protein sequence ID" value="EAW49489.1"/>
    <property type="molecule type" value="Genomic_DNA"/>
</dbReference>
<dbReference type="EMBL" id="CH471066">
    <property type="protein sequence ID" value="EAW49490.1"/>
    <property type="molecule type" value="Genomic_DNA"/>
</dbReference>
<dbReference type="EMBL" id="BC013124">
    <property type="protein sequence ID" value="AAH13124.1"/>
    <property type="molecule type" value="mRNA"/>
</dbReference>
<dbReference type="EMBL" id="BC062582">
    <property type="protein sequence ID" value="AAH62582.1"/>
    <property type="molecule type" value="mRNA"/>
</dbReference>
<dbReference type="CCDS" id="CCDS7584.1"/>
<dbReference type="RefSeq" id="NP_001258745.1">
    <property type="nucleotide sequence ID" value="NM_001271816.2"/>
</dbReference>
<dbReference type="RefSeq" id="NP_055696.3">
    <property type="nucleotide sequence ID" value="NM_014881.4"/>
</dbReference>
<dbReference type="RefSeq" id="XP_006718153.1">
    <property type="nucleotide sequence ID" value="XM_006718090.2"/>
</dbReference>
<dbReference type="RefSeq" id="XP_011538731.1">
    <property type="nucleotide sequence ID" value="XM_011540429.2"/>
</dbReference>
<dbReference type="PDB" id="4B87">
    <property type="method" value="X-ray"/>
    <property type="resolution" value="2.16 A"/>
    <property type="chains" value="A=676-1040"/>
</dbReference>
<dbReference type="PDB" id="5AHR">
    <property type="method" value="X-ray"/>
    <property type="resolution" value="2.19 A"/>
    <property type="chains" value="A=700-1040"/>
</dbReference>
<dbReference type="PDB" id="5NZW">
    <property type="method" value="X-ray"/>
    <property type="resolution" value="2.70 A"/>
    <property type="chains" value="A=698-1040"/>
</dbReference>
<dbReference type="PDB" id="5NZX">
    <property type="method" value="X-ray"/>
    <property type="resolution" value="1.47 A"/>
    <property type="chains" value="A=698-1040"/>
</dbReference>
<dbReference type="PDB" id="5NZY">
    <property type="method" value="X-ray"/>
    <property type="resolution" value="1.55 A"/>
    <property type="chains" value="A=698-1040"/>
</dbReference>
<dbReference type="PDB" id="5Q1J">
    <property type="method" value="X-ray"/>
    <property type="resolution" value="1.42 A"/>
    <property type="chains" value="A=698-1040"/>
</dbReference>
<dbReference type="PDB" id="5Q1K">
    <property type="method" value="X-ray"/>
    <property type="resolution" value="1.42 A"/>
    <property type="chains" value="A=698-1040"/>
</dbReference>
<dbReference type="PDB" id="5Q1L">
    <property type="method" value="X-ray"/>
    <property type="resolution" value="1.76 A"/>
    <property type="chains" value="A=698-1040"/>
</dbReference>
<dbReference type="PDB" id="5Q1M">
    <property type="method" value="X-ray"/>
    <property type="resolution" value="1.56 A"/>
    <property type="chains" value="A=698-1040"/>
</dbReference>
<dbReference type="PDB" id="5Q1N">
    <property type="method" value="X-ray"/>
    <property type="resolution" value="1.38 A"/>
    <property type="chains" value="A=698-1040"/>
</dbReference>
<dbReference type="PDB" id="5Q1O">
    <property type="method" value="X-ray"/>
    <property type="resolution" value="1.25 A"/>
    <property type="chains" value="A=698-1040"/>
</dbReference>
<dbReference type="PDB" id="5Q1P">
    <property type="method" value="X-ray"/>
    <property type="resolution" value="1.56 A"/>
    <property type="chains" value="A=698-1040"/>
</dbReference>
<dbReference type="PDB" id="5Q1Q">
    <property type="method" value="X-ray"/>
    <property type="resolution" value="1.44 A"/>
    <property type="chains" value="A=698-1040"/>
</dbReference>
<dbReference type="PDB" id="5Q1R">
    <property type="method" value="X-ray"/>
    <property type="resolution" value="1.49 A"/>
    <property type="chains" value="A=698-1040"/>
</dbReference>
<dbReference type="PDB" id="5Q1S">
    <property type="method" value="X-ray"/>
    <property type="resolution" value="1.62 A"/>
    <property type="chains" value="A=698-1040"/>
</dbReference>
<dbReference type="PDB" id="5Q1T">
    <property type="method" value="X-ray"/>
    <property type="resolution" value="1.49 A"/>
    <property type="chains" value="A=698-1040"/>
</dbReference>
<dbReference type="PDB" id="5Q1U">
    <property type="method" value="X-ray"/>
    <property type="resolution" value="1.50 A"/>
    <property type="chains" value="A=698-1040"/>
</dbReference>
<dbReference type="PDB" id="5Q1V">
    <property type="method" value="X-ray"/>
    <property type="resolution" value="1.57 A"/>
    <property type="chains" value="A=698-1040"/>
</dbReference>
<dbReference type="PDB" id="5Q1W">
    <property type="method" value="X-ray"/>
    <property type="resolution" value="1.68 A"/>
    <property type="chains" value="A=698-1040"/>
</dbReference>
<dbReference type="PDB" id="5Q1X">
    <property type="method" value="X-ray"/>
    <property type="resolution" value="1.42 A"/>
    <property type="chains" value="A=698-1040"/>
</dbReference>
<dbReference type="PDB" id="5Q1Y">
    <property type="method" value="X-ray"/>
    <property type="resolution" value="1.42 A"/>
    <property type="chains" value="A=698-1040"/>
</dbReference>
<dbReference type="PDB" id="5Q1Z">
    <property type="method" value="X-ray"/>
    <property type="resolution" value="1.41 A"/>
    <property type="chains" value="A=698-1040"/>
</dbReference>
<dbReference type="PDB" id="5Q20">
    <property type="method" value="X-ray"/>
    <property type="resolution" value="1.76 A"/>
    <property type="chains" value="A=698-1040"/>
</dbReference>
<dbReference type="PDB" id="5Q22">
    <property type="method" value="X-ray"/>
    <property type="resolution" value="1.18 A"/>
    <property type="chains" value="A=698-1040"/>
</dbReference>
<dbReference type="PDB" id="5Q23">
    <property type="method" value="X-ray"/>
    <property type="resolution" value="1.32 A"/>
    <property type="chains" value="A=698-1040"/>
</dbReference>
<dbReference type="PDB" id="5Q24">
    <property type="method" value="X-ray"/>
    <property type="resolution" value="1.35 A"/>
    <property type="chains" value="A=698-1040"/>
</dbReference>
<dbReference type="PDB" id="5Q25">
    <property type="method" value="X-ray"/>
    <property type="resolution" value="1.43 A"/>
    <property type="chains" value="A=698-1040"/>
</dbReference>
<dbReference type="PDB" id="5Q26">
    <property type="method" value="X-ray"/>
    <property type="resolution" value="1.66 A"/>
    <property type="chains" value="A=698-1040"/>
</dbReference>
<dbReference type="PDB" id="5Q27">
    <property type="method" value="X-ray"/>
    <property type="resolution" value="1.83 A"/>
    <property type="chains" value="A=698-1040"/>
</dbReference>
<dbReference type="PDB" id="5Q28">
    <property type="method" value="X-ray"/>
    <property type="resolution" value="1.52 A"/>
    <property type="chains" value="A=698-1040"/>
</dbReference>
<dbReference type="PDB" id="5Q29">
    <property type="method" value="X-ray"/>
    <property type="resolution" value="1.46 A"/>
    <property type="chains" value="A=698-1040"/>
</dbReference>
<dbReference type="PDB" id="5Q2A">
    <property type="method" value="X-ray"/>
    <property type="resolution" value="1.50 A"/>
    <property type="chains" value="A=698-1040"/>
</dbReference>
<dbReference type="PDB" id="5Q2B">
    <property type="method" value="X-ray"/>
    <property type="resolution" value="1.33 A"/>
    <property type="chains" value="A=698-1040"/>
</dbReference>
<dbReference type="PDB" id="5Q2C">
    <property type="method" value="X-ray"/>
    <property type="resolution" value="1.53 A"/>
    <property type="chains" value="A=698-1040"/>
</dbReference>
<dbReference type="PDB" id="5Q2D">
    <property type="method" value="X-ray"/>
    <property type="resolution" value="1.40 A"/>
    <property type="chains" value="A=698-1040"/>
</dbReference>
<dbReference type="PDB" id="5Q2E">
    <property type="method" value="X-ray"/>
    <property type="resolution" value="1.50 A"/>
    <property type="chains" value="A=698-1040"/>
</dbReference>
<dbReference type="PDB" id="5Q2F">
    <property type="method" value="X-ray"/>
    <property type="resolution" value="1.47 A"/>
    <property type="chains" value="A=698-1040"/>
</dbReference>
<dbReference type="PDB" id="5Q2G">
    <property type="method" value="X-ray"/>
    <property type="resolution" value="1.49 A"/>
    <property type="chains" value="A=698-1040"/>
</dbReference>
<dbReference type="PDB" id="5Q2H">
    <property type="method" value="X-ray"/>
    <property type="resolution" value="1.72 A"/>
    <property type="chains" value="A=698-1040"/>
</dbReference>
<dbReference type="PDB" id="5Q2I">
    <property type="method" value="X-ray"/>
    <property type="resolution" value="2.33 A"/>
    <property type="chains" value="A=698-1040"/>
</dbReference>
<dbReference type="PDB" id="5Q2J">
    <property type="method" value="X-ray"/>
    <property type="resolution" value="1.30 A"/>
    <property type="chains" value="A=698-1040"/>
</dbReference>
<dbReference type="PDB" id="5Q2K">
    <property type="method" value="X-ray"/>
    <property type="resolution" value="1.65 A"/>
    <property type="chains" value="A=698-1040"/>
</dbReference>
<dbReference type="PDB" id="5Q2L">
    <property type="method" value="X-ray"/>
    <property type="resolution" value="1.42 A"/>
    <property type="chains" value="A=698-1040"/>
</dbReference>
<dbReference type="PDB" id="5Q2M">
    <property type="method" value="X-ray"/>
    <property type="resolution" value="1.28 A"/>
    <property type="chains" value="A=698-1040"/>
</dbReference>
<dbReference type="PDB" id="5Q2N">
    <property type="method" value="X-ray"/>
    <property type="resolution" value="1.38 A"/>
    <property type="chains" value="A=698-1040"/>
</dbReference>
<dbReference type="PDB" id="5Q2O">
    <property type="method" value="X-ray"/>
    <property type="resolution" value="1.75 A"/>
    <property type="chains" value="A=698-1040"/>
</dbReference>
<dbReference type="PDB" id="5Q2P">
    <property type="method" value="X-ray"/>
    <property type="resolution" value="1.55 A"/>
    <property type="chains" value="A=698-1040"/>
</dbReference>
<dbReference type="PDB" id="5Q2Q">
    <property type="method" value="X-ray"/>
    <property type="resolution" value="1.44 A"/>
    <property type="chains" value="A=698-1040"/>
</dbReference>
<dbReference type="PDB" id="5Q2R">
    <property type="method" value="X-ray"/>
    <property type="resolution" value="1.37 A"/>
    <property type="chains" value="A=698-1040"/>
</dbReference>
<dbReference type="PDB" id="5Q2S">
    <property type="method" value="X-ray"/>
    <property type="resolution" value="1.52 A"/>
    <property type="chains" value="A=698-1040"/>
</dbReference>
<dbReference type="PDB" id="5Q2T">
    <property type="method" value="X-ray"/>
    <property type="resolution" value="1.52 A"/>
    <property type="chains" value="A=698-1040"/>
</dbReference>
<dbReference type="PDB" id="5Q2U">
    <property type="method" value="X-ray"/>
    <property type="resolution" value="1.37 A"/>
    <property type="chains" value="A=698-1040"/>
</dbReference>
<dbReference type="PDB" id="5Q2V">
    <property type="method" value="X-ray"/>
    <property type="resolution" value="1.58 A"/>
    <property type="chains" value="A=698-1040"/>
</dbReference>
<dbReference type="PDB" id="5Q2W">
    <property type="method" value="X-ray"/>
    <property type="resolution" value="1.53 A"/>
    <property type="chains" value="A=698-1040"/>
</dbReference>
<dbReference type="PDB" id="5Q2X">
    <property type="method" value="X-ray"/>
    <property type="resolution" value="1.50 A"/>
    <property type="chains" value="A=698-1040"/>
</dbReference>
<dbReference type="PDB" id="5Q2Y">
    <property type="method" value="X-ray"/>
    <property type="resolution" value="1.61 A"/>
    <property type="chains" value="A=698-1040"/>
</dbReference>
<dbReference type="PDB" id="5Q2Z">
    <property type="method" value="X-ray"/>
    <property type="resolution" value="1.55 A"/>
    <property type="chains" value="A=698-1040"/>
</dbReference>
<dbReference type="PDB" id="5Q30">
    <property type="method" value="X-ray"/>
    <property type="resolution" value="1.80 A"/>
    <property type="chains" value="A=698-1040"/>
</dbReference>
<dbReference type="PDB" id="5Q31">
    <property type="method" value="X-ray"/>
    <property type="resolution" value="1.55 A"/>
    <property type="chains" value="A=698-1040"/>
</dbReference>
<dbReference type="PDB" id="5Q32">
    <property type="method" value="X-ray"/>
    <property type="resolution" value="1.87 A"/>
    <property type="chains" value="A=698-1040"/>
</dbReference>
<dbReference type="PDB" id="5Q33">
    <property type="method" value="X-ray"/>
    <property type="resolution" value="1.37 A"/>
    <property type="chains" value="A=698-1040"/>
</dbReference>
<dbReference type="PDB" id="5Q34">
    <property type="method" value="X-ray"/>
    <property type="resolution" value="1.49 A"/>
    <property type="chains" value="A=698-1040"/>
</dbReference>
<dbReference type="PDB" id="5Q35">
    <property type="method" value="X-ray"/>
    <property type="resolution" value="1.47 A"/>
    <property type="chains" value="A=698-1040"/>
</dbReference>
<dbReference type="PDB" id="5Q36">
    <property type="method" value="X-ray"/>
    <property type="resolution" value="1.39 A"/>
    <property type="chains" value="A=698-1040"/>
</dbReference>
<dbReference type="PDB" id="5Q37">
    <property type="method" value="X-ray"/>
    <property type="resolution" value="1.50 A"/>
    <property type="chains" value="A=698-1040"/>
</dbReference>
<dbReference type="PDB" id="5Q38">
    <property type="method" value="X-ray"/>
    <property type="resolution" value="1.39 A"/>
    <property type="chains" value="A=698-1040"/>
</dbReference>
<dbReference type="PDB" id="5Q39">
    <property type="method" value="X-ray"/>
    <property type="resolution" value="1.70 A"/>
    <property type="chains" value="A=698-1040"/>
</dbReference>
<dbReference type="PDB" id="5Q3A">
    <property type="method" value="X-ray"/>
    <property type="resolution" value="1.48 A"/>
    <property type="chains" value="A=698-1040"/>
</dbReference>
<dbReference type="PDB" id="5Q3B">
    <property type="method" value="X-ray"/>
    <property type="resolution" value="2.52 A"/>
    <property type="chains" value="A=698-1040"/>
</dbReference>
<dbReference type="PDB" id="5Q3C">
    <property type="method" value="X-ray"/>
    <property type="resolution" value="1.41 A"/>
    <property type="chains" value="A=698-1040"/>
</dbReference>
<dbReference type="PDB" id="5Q3D">
    <property type="method" value="X-ray"/>
    <property type="resolution" value="1.71 A"/>
    <property type="chains" value="A=698-1040"/>
</dbReference>
<dbReference type="PDB" id="5Q3E">
    <property type="method" value="X-ray"/>
    <property type="resolution" value="1.49 A"/>
    <property type="chains" value="A=698-1040"/>
</dbReference>
<dbReference type="PDB" id="5Q3F">
    <property type="method" value="X-ray"/>
    <property type="resolution" value="1.39 A"/>
    <property type="chains" value="A=698-1040"/>
</dbReference>
<dbReference type="PDB" id="5Q3G">
    <property type="method" value="X-ray"/>
    <property type="resolution" value="1.29 A"/>
    <property type="chains" value="A=698-1040"/>
</dbReference>
<dbReference type="PDB" id="5Q3H">
    <property type="method" value="X-ray"/>
    <property type="resolution" value="1.56 A"/>
    <property type="chains" value="A=698-1040"/>
</dbReference>
<dbReference type="PDB" id="5Q3I">
    <property type="method" value="X-ray"/>
    <property type="resolution" value="1.53 A"/>
    <property type="chains" value="A=698-1040"/>
</dbReference>
<dbReference type="PDB" id="5Q3J">
    <property type="method" value="X-ray"/>
    <property type="resolution" value="1.44 A"/>
    <property type="chains" value="A=698-1040"/>
</dbReference>
<dbReference type="PDB" id="5Q3K">
    <property type="method" value="X-ray"/>
    <property type="resolution" value="1.39 A"/>
    <property type="chains" value="A=698-1040"/>
</dbReference>
<dbReference type="PDB" id="5Q3L">
    <property type="method" value="X-ray"/>
    <property type="resolution" value="1.61 A"/>
    <property type="chains" value="A=698-1040"/>
</dbReference>
<dbReference type="PDB" id="5Q3M">
    <property type="method" value="X-ray"/>
    <property type="resolution" value="1.34 A"/>
    <property type="chains" value="A=698-1040"/>
</dbReference>
<dbReference type="PDB" id="5Q3N">
    <property type="method" value="X-ray"/>
    <property type="resolution" value="1.62 A"/>
    <property type="chains" value="A=698-1040"/>
</dbReference>
<dbReference type="PDB" id="5Q3O">
    <property type="method" value="X-ray"/>
    <property type="resolution" value="1.60 A"/>
    <property type="chains" value="A=698-1040"/>
</dbReference>
<dbReference type="PDB" id="5Q3P">
    <property type="method" value="X-ray"/>
    <property type="resolution" value="1.44 A"/>
    <property type="chains" value="A=698-1040"/>
</dbReference>
<dbReference type="PDB" id="5Q3Q">
    <property type="method" value="X-ray"/>
    <property type="resolution" value="1.39 A"/>
    <property type="chains" value="A=698-1040"/>
</dbReference>
<dbReference type="PDB" id="5Q3R">
    <property type="method" value="X-ray"/>
    <property type="resolution" value="1.50 A"/>
    <property type="chains" value="A=698-1040"/>
</dbReference>
<dbReference type="PDB" id="5Q3S">
    <property type="method" value="X-ray"/>
    <property type="resolution" value="1.72 A"/>
    <property type="chains" value="A=698-1040"/>
</dbReference>
<dbReference type="PDB" id="5Q3T">
    <property type="method" value="X-ray"/>
    <property type="resolution" value="1.52 A"/>
    <property type="chains" value="A=698-1040"/>
</dbReference>
<dbReference type="PDB" id="5Q3U">
    <property type="method" value="X-ray"/>
    <property type="resolution" value="1.49 A"/>
    <property type="chains" value="A=698-1040"/>
</dbReference>
<dbReference type="PDB" id="5Q3V">
    <property type="method" value="X-ray"/>
    <property type="resolution" value="1.52 A"/>
    <property type="chains" value="A=698-1040"/>
</dbReference>
<dbReference type="PDB" id="5Q3W">
    <property type="method" value="X-ray"/>
    <property type="resolution" value="1.50 A"/>
    <property type="chains" value="A=698-1040"/>
</dbReference>
<dbReference type="PDB" id="5Q3X">
    <property type="method" value="X-ray"/>
    <property type="resolution" value="1.38 A"/>
    <property type="chains" value="A=698-1040"/>
</dbReference>
<dbReference type="PDB" id="5Q3Y">
    <property type="method" value="X-ray"/>
    <property type="resolution" value="1.45 A"/>
    <property type="chains" value="A=698-1040"/>
</dbReference>
<dbReference type="PDB" id="5Q3Z">
    <property type="method" value="X-ray"/>
    <property type="resolution" value="1.84 A"/>
    <property type="chains" value="A=698-1040"/>
</dbReference>
<dbReference type="PDB" id="5Q40">
    <property type="method" value="X-ray"/>
    <property type="resolution" value="2.04 A"/>
    <property type="chains" value="A=698-1040"/>
</dbReference>
<dbReference type="PDB" id="5Q41">
    <property type="method" value="X-ray"/>
    <property type="resolution" value="1.95 A"/>
    <property type="chains" value="A=698-1040"/>
</dbReference>
<dbReference type="PDB" id="5Q42">
    <property type="method" value="X-ray"/>
    <property type="resolution" value="1.68 A"/>
    <property type="chains" value="A=698-1040"/>
</dbReference>
<dbReference type="PDB" id="5Q43">
    <property type="method" value="X-ray"/>
    <property type="resolution" value="1.47 A"/>
    <property type="chains" value="A=698-1040"/>
</dbReference>
<dbReference type="PDB" id="5Q44">
    <property type="method" value="X-ray"/>
    <property type="resolution" value="1.55 A"/>
    <property type="chains" value="A=698-1040"/>
</dbReference>
<dbReference type="PDB" id="5Q45">
    <property type="method" value="X-ray"/>
    <property type="resolution" value="1.64 A"/>
    <property type="chains" value="A=698-1040"/>
</dbReference>
<dbReference type="PDB" id="5Q46">
    <property type="method" value="X-ray"/>
    <property type="resolution" value="2.01 A"/>
    <property type="chains" value="A=698-1040"/>
</dbReference>
<dbReference type="PDB" id="5Q47">
    <property type="method" value="X-ray"/>
    <property type="resolution" value="1.38 A"/>
    <property type="chains" value="A=698-1040"/>
</dbReference>
<dbReference type="PDB" id="5Q48">
    <property type="method" value="X-ray"/>
    <property type="resolution" value="1.44 A"/>
    <property type="chains" value="A=698-1040"/>
</dbReference>
<dbReference type="PDB" id="5Q49">
    <property type="method" value="X-ray"/>
    <property type="resolution" value="1.38 A"/>
    <property type="chains" value="A=698-1040"/>
</dbReference>
<dbReference type="PDB" id="5Q4A">
    <property type="method" value="X-ray"/>
    <property type="resolution" value="1.83 A"/>
    <property type="chains" value="A=698-1040"/>
</dbReference>
<dbReference type="PDB" id="5Q4B">
    <property type="method" value="X-ray"/>
    <property type="resolution" value="1.60 A"/>
    <property type="chains" value="A=698-1040"/>
</dbReference>
<dbReference type="PDB" id="5Q4C">
    <property type="method" value="X-ray"/>
    <property type="resolution" value="2.73 A"/>
    <property type="chains" value="A=698-1040"/>
</dbReference>
<dbReference type="PDB" id="5Q4D">
    <property type="method" value="X-ray"/>
    <property type="resolution" value="1.80 A"/>
    <property type="chains" value="A=698-1040"/>
</dbReference>
<dbReference type="PDB" id="5Q4E">
    <property type="method" value="X-ray"/>
    <property type="resolution" value="1.39 A"/>
    <property type="chains" value="A=698-1040"/>
</dbReference>
<dbReference type="PDB" id="5Q4F">
    <property type="method" value="X-ray"/>
    <property type="resolution" value="1.97 A"/>
    <property type="chains" value="A=698-1040"/>
</dbReference>
<dbReference type="PDB" id="5Q4G">
    <property type="method" value="X-ray"/>
    <property type="resolution" value="1.75 A"/>
    <property type="chains" value="A=698-1040"/>
</dbReference>
<dbReference type="PDB" id="5Q4H">
    <property type="method" value="X-ray"/>
    <property type="resolution" value="1.53 A"/>
    <property type="chains" value="A=698-1040"/>
</dbReference>
<dbReference type="PDB" id="5Q4I">
    <property type="method" value="X-ray"/>
    <property type="resolution" value="1.55 A"/>
    <property type="chains" value="A=698-1040"/>
</dbReference>
<dbReference type="PDB" id="5Q4J">
    <property type="method" value="X-ray"/>
    <property type="resolution" value="1.55 A"/>
    <property type="chains" value="A=698-1040"/>
</dbReference>
<dbReference type="PDB" id="5Q4K">
    <property type="method" value="X-ray"/>
    <property type="resolution" value="1.47 A"/>
    <property type="chains" value="A=698-1040"/>
</dbReference>
<dbReference type="PDB" id="5Q4L">
    <property type="method" value="X-ray"/>
    <property type="resolution" value="1.60 A"/>
    <property type="chains" value="A=698-1040"/>
</dbReference>
<dbReference type="PDB" id="5Q4M">
    <property type="method" value="X-ray"/>
    <property type="resolution" value="1.60 A"/>
    <property type="chains" value="A=698-1040"/>
</dbReference>
<dbReference type="PDB" id="5Q4N">
    <property type="method" value="X-ray"/>
    <property type="resolution" value="1.71 A"/>
    <property type="chains" value="A=698-1040"/>
</dbReference>
<dbReference type="PDB" id="5Q4O">
    <property type="method" value="X-ray"/>
    <property type="resolution" value="1.83 A"/>
    <property type="chains" value="A=698-1040"/>
</dbReference>
<dbReference type="PDB" id="5Q4P">
    <property type="method" value="X-ray"/>
    <property type="resolution" value="1.40 A"/>
    <property type="chains" value="A=698-1040"/>
</dbReference>
<dbReference type="PDB" id="5Q4Q">
    <property type="method" value="X-ray"/>
    <property type="resolution" value="1.42 A"/>
    <property type="chains" value="A=698-1040"/>
</dbReference>
<dbReference type="PDB" id="5Q4R">
    <property type="method" value="X-ray"/>
    <property type="resolution" value="2.00 A"/>
    <property type="chains" value="A=698-1040"/>
</dbReference>
<dbReference type="PDB" id="5Q4S">
    <property type="method" value="X-ray"/>
    <property type="resolution" value="1.72 A"/>
    <property type="chains" value="A=698-1040"/>
</dbReference>
<dbReference type="PDB" id="5Q4T">
    <property type="method" value="X-ray"/>
    <property type="resolution" value="1.77 A"/>
    <property type="chains" value="A=698-1040"/>
</dbReference>
<dbReference type="PDB" id="5Q4U">
    <property type="method" value="X-ray"/>
    <property type="resolution" value="2.00 A"/>
    <property type="chains" value="A=698-1040"/>
</dbReference>
<dbReference type="PDB" id="5Q4V">
    <property type="method" value="X-ray"/>
    <property type="resolution" value="1.59 A"/>
    <property type="chains" value="A=698-1040"/>
</dbReference>
<dbReference type="PDB" id="5Q4W">
    <property type="method" value="X-ray"/>
    <property type="resolution" value="1.80 A"/>
    <property type="chains" value="A=698-1040"/>
</dbReference>
<dbReference type="PDB" id="5Q4X">
    <property type="method" value="X-ray"/>
    <property type="resolution" value="1.66 A"/>
    <property type="chains" value="A=698-1040"/>
</dbReference>
<dbReference type="PDB" id="5Q4Y">
    <property type="method" value="X-ray"/>
    <property type="resolution" value="1.69 A"/>
    <property type="chains" value="A=698-1040"/>
</dbReference>
<dbReference type="PDB" id="5Q4Z">
    <property type="method" value="X-ray"/>
    <property type="resolution" value="1.60 A"/>
    <property type="chains" value="A=698-1040"/>
</dbReference>
<dbReference type="PDB" id="5Q50">
    <property type="method" value="X-ray"/>
    <property type="resolution" value="2.00 A"/>
    <property type="chains" value="A=698-1040"/>
</dbReference>
<dbReference type="PDB" id="5Q51">
    <property type="method" value="X-ray"/>
    <property type="resolution" value="1.34 A"/>
    <property type="chains" value="A=698-1040"/>
</dbReference>
<dbReference type="PDB" id="5Q52">
    <property type="method" value="X-ray"/>
    <property type="resolution" value="1.70 A"/>
    <property type="chains" value="A=698-1040"/>
</dbReference>
<dbReference type="PDB" id="5Q53">
    <property type="method" value="X-ray"/>
    <property type="resolution" value="1.55 A"/>
    <property type="chains" value="A=698-1040"/>
</dbReference>
<dbReference type="PDB" id="5Q54">
    <property type="method" value="X-ray"/>
    <property type="resolution" value="1.30 A"/>
    <property type="chains" value="A=698-1040"/>
</dbReference>
<dbReference type="PDB" id="5Q55">
    <property type="method" value="X-ray"/>
    <property type="resolution" value="1.39 A"/>
    <property type="chains" value="A=698-1040"/>
</dbReference>
<dbReference type="PDB" id="5Q56">
    <property type="method" value="X-ray"/>
    <property type="resolution" value="1.87 A"/>
    <property type="chains" value="A=698-1040"/>
</dbReference>
<dbReference type="PDB" id="5Q57">
    <property type="method" value="X-ray"/>
    <property type="resolution" value="1.65 A"/>
    <property type="chains" value="A=698-1040"/>
</dbReference>
<dbReference type="PDB" id="5Q58">
    <property type="method" value="X-ray"/>
    <property type="resolution" value="1.75 A"/>
    <property type="chains" value="A=698-1040"/>
</dbReference>
<dbReference type="PDB" id="5Q59">
    <property type="method" value="X-ray"/>
    <property type="resolution" value="1.86 A"/>
    <property type="chains" value="A=698-1040"/>
</dbReference>
<dbReference type="PDB" id="5Q5A">
    <property type="method" value="X-ray"/>
    <property type="resolution" value="2.26 A"/>
    <property type="chains" value="A=698-1040"/>
</dbReference>
<dbReference type="PDB" id="5Q5B">
    <property type="method" value="X-ray"/>
    <property type="resolution" value="1.58 A"/>
    <property type="chains" value="A=698-1040"/>
</dbReference>
<dbReference type="PDB" id="5Q5C">
    <property type="method" value="X-ray"/>
    <property type="resolution" value="1.38 A"/>
    <property type="chains" value="A=698-1040"/>
</dbReference>
<dbReference type="PDB" id="5Q5D">
    <property type="method" value="X-ray"/>
    <property type="resolution" value="1.71 A"/>
    <property type="chains" value="A=698-1040"/>
</dbReference>
<dbReference type="PDB" id="5Q5E">
    <property type="method" value="X-ray"/>
    <property type="resolution" value="1.49 A"/>
    <property type="chains" value="A=698-1040"/>
</dbReference>
<dbReference type="PDB" id="5Q5F">
    <property type="method" value="X-ray"/>
    <property type="resolution" value="1.47 A"/>
    <property type="chains" value="A=698-1040"/>
</dbReference>
<dbReference type="PDB" id="5Q5G">
    <property type="method" value="X-ray"/>
    <property type="resolution" value="2.00 A"/>
    <property type="chains" value="A=698-1040"/>
</dbReference>
<dbReference type="PDB" id="5Q5H">
    <property type="method" value="X-ray"/>
    <property type="resolution" value="1.36 A"/>
    <property type="chains" value="A=698-1040"/>
</dbReference>
<dbReference type="PDB" id="5Q5I">
    <property type="method" value="X-ray"/>
    <property type="resolution" value="1.65 A"/>
    <property type="chains" value="A=698-1040"/>
</dbReference>
<dbReference type="PDB" id="5Q5J">
    <property type="method" value="X-ray"/>
    <property type="resolution" value="2.00 A"/>
    <property type="chains" value="A=698-1040"/>
</dbReference>
<dbReference type="PDB" id="5Q5K">
    <property type="method" value="X-ray"/>
    <property type="resolution" value="2.81 A"/>
    <property type="chains" value="A=698-1040"/>
</dbReference>
<dbReference type="PDB" id="5Q5L">
    <property type="method" value="X-ray"/>
    <property type="resolution" value="2.00 A"/>
    <property type="chains" value="A=698-1040"/>
</dbReference>
<dbReference type="PDB" id="5Q5M">
    <property type="method" value="X-ray"/>
    <property type="resolution" value="1.57 A"/>
    <property type="chains" value="A=698-1040"/>
</dbReference>
<dbReference type="PDB" id="5Q5N">
    <property type="method" value="X-ray"/>
    <property type="resolution" value="2.42 A"/>
    <property type="chains" value="A=698-1040"/>
</dbReference>
<dbReference type="PDB" id="5Q5O">
    <property type="method" value="X-ray"/>
    <property type="resolution" value="2.07 A"/>
    <property type="chains" value="A=698-1040"/>
</dbReference>
<dbReference type="PDB" id="5Q5P">
    <property type="method" value="X-ray"/>
    <property type="resolution" value="1.58 A"/>
    <property type="chains" value="A=698-1040"/>
</dbReference>
<dbReference type="PDB" id="5Q5Q">
    <property type="method" value="X-ray"/>
    <property type="resolution" value="1.45 A"/>
    <property type="chains" value="A=698-1040"/>
</dbReference>
<dbReference type="PDB" id="5Q5R">
    <property type="method" value="X-ray"/>
    <property type="resolution" value="1.39 A"/>
    <property type="chains" value="A=698-1040"/>
</dbReference>
<dbReference type="PDB" id="5Q5S">
    <property type="method" value="X-ray"/>
    <property type="resolution" value="1.70 A"/>
    <property type="chains" value="A=698-1040"/>
</dbReference>
<dbReference type="PDB" id="5Q5T">
    <property type="method" value="X-ray"/>
    <property type="resolution" value="1.80 A"/>
    <property type="chains" value="A=698-1040"/>
</dbReference>
<dbReference type="PDB" id="5Q5U">
    <property type="method" value="X-ray"/>
    <property type="resolution" value="1.88 A"/>
    <property type="chains" value="A=698-1040"/>
</dbReference>
<dbReference type="PDB" id="5Q5V">
    <property type="method" value="X-ray"/>
    <property type="resolution" value="1.86 A"/>
    <property type="chains" value="A=698-1040"/>
</dbReference>
<dbReference type="PDB" id="5Q5W">
    <property type="method" value="X-ray"/>
    <property type="resolution" value="1.42 A"/>
    <property type="chains" value="A=698-1040"/>
</dbReference>
<dbReference type="PDB" id="5Q5X">
    <property type="method" value="X-ray"/>
    <property type="resolution" value="1.50 A"/>
    <property type="chains" value="A=698-1040"/>
</dbReference>
<dbReference type="PDB" id="5Q5Y">
    <property type="method" value="X-ray"/>
    <property type="resolution" value="1.82 A"/>
    <property type="chains" value="A=698-1040"/>
</dbReference>
<dbReference type="PDB" id="5Q5Z">
    <property type="method" value="X-ray"/>
    <property type="resolution" value="1.48 A"/>
    <property type="chains" value="A=698-1040"/>
</dbReference>
<dbReference type="PDB" id="5Q60">
    <property type="method" value="X-ray"/>
    <property type="resolution" value="1.40 A"/>
    <property type="chains" value="A=698-1040"/>
</dbReference>
<dbReference type="PDB" id="5Q61">
    <property type="method" value="X-ray"/>
    <property type="resolution" value="1.71 A"/>
    <property type="chains" value="A=698-1040"/>
</dbReference>
<dbReference type="PDB" id="5Q62">
    <property type="method" value="X-ray"/>
    <property type="resolution" value="1.52 A"/>
    <property type="chains" value="A=698-1040"/>
</dbReference>
<dbReference type="PDB" id="5Q63">
    <property type="method" value="X-ray"/>
    <property type="resolution" value="1.82 A"/>
    <property type="chains" value="A=698-1040"/>
</dbReference>
<dbReference type="PDB" id="5Q64">
    <property type="method" value="X-ray"/>
    <property type="resolution" value="1.42 A"/>
    <property type="chains" value="A=698-1040"/>
</dbReference>
<dbReference type="PDB" id="5Q65">
    <property type="method" value="X-ray"/>
    <property type="resolution" value="1.78 A"/>
    <property type="chains" value="A=698-1040"/>
</dbReference>
<dbReference type="PDB" id="5Q66">
    <property type="method" value="X-ray"/>
    <property type="resolution" value="1.51 A"/>
    <property type="chains" value="A=698-1040"/>
</dbReference>
<dbReference type="PDB" id="5Q67">
    <property type="method" value="X-ray"/>
    <property type="resolution" value="1.65 A"/>
    <property type="chains" value="A=698-1040"/>
</dbReference>
<dbReference type="PDB" id="5Q68">
    <property type="method" value="X-ray"/>
    <property type="resolution" value="1.86 A"/>
    <property type="chains" value="A=698-1040"/>
</dbReference>
<dbReference type="PDB" id="5Q69">
    <property type="method" value="X-ray"/>
    <property type="resolution" value="1.84 A"/>
    <property type="chains" value="A=698-1040"/>
</dbReference>
<dbReference type="PDB" id="5Q6A">
    <property type="method" value="X-ray"/>
    <property type="resolution" value="1.71 A"/>
    <property type="chains" value="A=698-1040"/>
</dbReference>
<dbReference type="PDB" id="5Q6B">
    <property type="method" value="X-ray"/>
    <property type="resolution" value="2.62 A"/>
    <property type="chains" value="A=698-1040"/>
</dbReference>
<dbReference type="PDB" id="5Q6C">
    <property type="method" value="X-ray"/>
    <property type="resolution" value="1.53 A"/>
    <property type="chains" value="A=698-1040"/>
</dbReference>
<dbReference type="PDB" id="5Q6D">
    <property type="method" value="X-ray"/>
    <property type="resolution" value="1.48 A"/>
    <property type="chains" value="A=698-1040"/>
</dbReference>
<dbReference type="PDB" id="5Q6E">
    <property type="method" value="X-ray"/>
    <property type="resolution" value="1.47 A"/>
    <property type="chains" value="A=698-1040"/>
</dbReference>
<dbReference type="PDB" id="5Q6F">
    <property type="method" value="X-ray"/>
    <property type="resolution" value="1.55 A"/>
    <property type="chains" value="A=698-1040"/>
</dbReference>
<dbReference type="PDB" id="5Q6G">
    <property type="method" value="X-ray"/>
    <property type="resolution" value="1.48 A"/>
    <property type="chains" value="A=698-1040"/>
</dbReference>
<dbReference type="PDB" id="5Q6H">
    <property type="method" value="X-ray"/>
    <property type="resolution" value="1.42 A"/>
    <property type="chains" value="A=698-1040"/>
</dbReference>
<dbReference type="PDB" id="5Q6I">
    <property type="method" value="X-ray"/>
    <property type="resolution" value="1.68 A"/>
    <property type="chains" value="A=698-1040"/>
</dbReference>
<dbReference type="PDB" id="5Q6J">
    <property type="method" value="X-ray"/>
    <property type="resolution" value="1.70 A"/>
    <property type="chains" value="A=698-1040"/>
</dbReference>
<dbReference type="PDB" id="5Q6K">
    <property type="method" value="X-ray"/>
    <property type="resolution" value="1.67 A"/>
    <property type="chains" value="A=698-1040"/>
</dbReference>
<dbReference type="PDB" id="5Q6L">
    <property type="method" value="X-ray"/>
    <property type="resolution" value="1.82 A"/>
    <property type="chains" value="A=698-1040"/>
</dbReference>
<dbReference type="PDB" id="5Q6M">
    <property type="method" value="X-ray"/>
    <property type="resolution" value="1.47 A"/>
    <property type="chains" value="A=698-1040"/>
</dbReference>
<dbReference type="PDB" id="5Q6N">
    <property type="method" value="X-ray"/>
    <property type="resolution" value="1.52 A"/>
    <property type="chains" value="A=698-1040"/>
</dbReference>
<dbReference type="PDB" id="5Q6O">
    <property type="method" value="X-ray"/>
    <property type="resolution" value="1.40 A"/>
    <property type="chains" value="A=698-1040"/>
</dbReference>
<dbReference type="PDB" id="5Q6P">
    <property type="method" value="X-ray"/>
    <property type="resolution" value="1.54 A"/>
    <property type="chains" value="A=698-1040"/>
</dbReference>
<dbReference type="PDB" id="5Q6Q">
    <property type="method" value="X-ray"/>
    <property type="resolution" value="1.36 A"/>
    <property type="chains" value="A=698-1040"/>
</dbReference>
<dbReference type="PDB" id="5Q6R">
    <property type="method" value="X-ray"/>
    <property type="resolution" value="1.42 A"/>
    <property type="chains" value="A=698-1040"/>
</dbReference>
<dbReference type="PDB" id="5Q6S">
    <property type="method" value="X-ray"/>
    <property type="resolution" value="1.56 A"/>
    <property type="chains" value="A=698-1040"/>
</dbReference>
<dbReference type="PDB" id="5Q6T">
    <property type="method" value="X-ray"/>
    <property type="resolution" value="1.59 A"/>
    <property type="chains" value="A=698-1040"/>
</dbReference>
<dbReference type="PDB" id="5Q6U">
    <property type="method" value="X-ray"/>
    <property type="resolution" value="1.33 A"/>
    <property type="chains" value="A=698-1040"/>
</dbReference>
<dbReference type="PDB" id="5Q6V">
    <property type="method" value="X-ray"/>
    <property type="resolution" value="1.29 A"/>
    <property type="chains" value="A=698-1040"/>
</dbReference>
<dbReference type="PDB" id="5Q6W">
    <property type="method" value="X-ray"/>
    <property type="resolution" value="1.50 A"/>
    <property type="chains" value="A=698-1040"/>
</dbReference>
<dbReference type="PDB" id="5Q6X">
    <property type="method" value="X-ray"/>
    <property type="resolution" value="1.43 A"/>
    <property type="chains" value="A=698-1040"/>
</dbReference>
<dbReference type="PDB" id="5Q6Y">
    <property type="method" value="X-ray"/>
    <property type="resolution" value="1.67 A"/>
    <property type="chains" value="A=698-1040"/>
</dbReference>
<dbReference type="PDB" id="5Q6Z">
    <property type="method" value="X-ray"/>
    <property type="resolution" value="1.62 A"/>
    <property type="chains" value="A=698-1040"/>
</dbReference>
<dbReference type="PDB" id="5Q70">
    <property type="method" value="X-ray"/>
    <property type="resolution" value="1.31 A"/>
    <property type="chains" value="A=698-1040"/>
</dbReference>
<dbReference type="PDB" id="5Q71">
    <property type="method" value="X-ray"/>
    <property type="resolution" value="2.00 A"/>
    <property type="chains" value="A=698-1040"/>
</dbReference>
<dbReference type="PDB" id="5Q72">
    <property type="method" value="X-ray"/>
    <property type="resolution" value="1.31 A"/>
    <property type="chains" value="A=698-1040"/>
</dbReference>
<dbReference type="PDB" id="5Q73">
    <property type="method" value="X-ray"/>
    <property type="resolution" value="1.36 A"/>
    <property type="chains" value="A=698-1040"/>
</dbReference>
<dbReference type="PDB" id="5Q74">
    <property type="method" value="X-ray"/>
    <property type="resolution" value="1.21 A"/>
    <property type="chains" value="A=698-1040"/>
</dbReference>
<dbReference type="PDB" id="5Q75">
    <property type="method" value="X-ray"/>
    <property type="resolution" value="1.36 A"/>
    <property type="chains" value="A=698-1040"/>
</dbReference>
<dbReference type="PDB" id="5Q76">
    <property type="method" value="X-ray"/>
    <property type="resolution" value="1.28 A"/>
    <property type="chains" value="A=698-1040"/>
</dbReference>
<dbReference type="PDB" id="5Q77">
    <property type="method" value="X-ray"/>
    <property type="resolution" value="2.00 A"/>
    <property type="chains" value="A=698-1040"/>
</dbReference>
<dbReference type="PDB" id="5Q78">
    <property type="method" value="X-ray"/>
    <property type="resolution" value="1.25 A"/>
    <property type="chains" value="A=698-1040"/>
</dbReference>
<dbReference type="PDB" id="5Q79">
    <property type="method" value="X-ray"/>
    <property type="resolution" value="1.83 A"/>
    <property type="chains" value="A=698-1040"/>
</dbReference>
<dbReference type="PDB" id="5Q7A">
    <property type="method" value="X-ray"/>
    <property type="resolution" value="1.39 A"/>
    <property type="chains" value="A=698-1040"/>
</dbReference>
<dbReference type="PDB" id="5Q7B">
    <property type="method" value="X-ray"/>
    <property type="resolution" value="1.25 A"/>
    <property type="chains" value="A=698-1040"/>
</dbReference>
<dbReference type="PDB" id="5Q7C">
    <property type="method" value="X-ray"/>
    <property type="resolution" value="1.20 A"/>
    <property type="chains" value="A=698-1040"/>
</dbReference>
<dbReference type="PDB" id="5Q7D">
    <property type="method" value="X-ray"/>
    <property type="resolution" value="1.32 A"/>
    <property type="chains" value="A=698-1040"/>
</dbReference>
<dbReference type="PDB" id="5Q7E">
    <property type="method" value="X-ray"/>
    <property type="resolution" value="1.50 A"/>
    <property type="chains" value="A=698-1040"/>
</dbReference>
<dbReference type="PDB" id="5Q7F">
    <property type="method" value="X-ray"/>
    <property type="resolution" value="1.64 A"/>
    <property type="chains" value="A=698-1040"/>
</dbReference>
<dbReference type="PDB" id="5Q7G">
    <property type="method" value="X-ray"/>
    <property type="resolution" value="2.00 A"/>
    <property type="chains" value="A=698-1040"/>
</dbReference>
<dbReference type="PDB" id="5Q7H">
    <property type="method" value="X-ray"/>
    <property type="resolution" value="2.00 A"/>
    <property type="chains" value="A=698-1040"/>
</dbReference>
<dbReference type="PDB" id="5Q7I">
    <property type="method" value="X-ray"/>
    <property type="resolution" value="1.26 A"/>
    <property type="chains" value="A=698-1040"/>
</dbReference>
<dbReference type="PDB" id="5Q7J">
    <property type="method" value="X-ray"/>
    <property type="resolution" value="1.54 A"/>
    <property type="chains" value="A=698-1040"/>
</dbReference>
<dbReference type="PDB" id="5Q7K">
    <property type="method" value="X-ray"/>
    <property type="resolution" value="2.00 A"/>
    <property type="chains" value="A=698-1040"/>
</dbReference>
<dbReference type="PDB" id="5Q7L">
    <property type="method" value="X-ray"/>
    <property type="resolution" value="1.61 A"/>
    <property type="chains" value="A=698-1040"/>
</dbReference>
<dbReference type="PDB" id="5Q7M">
    <property type="method" value="X-ray"/>
    <property type="resolution" value="1.26 A"/>
    <property type="chains" value="A=698-1040"/>
</dbReference>
<dbReference type="PDB" id="5Q7N">
    <property type="method" value="X-ray"/>
    <property type="resolution" value="2.00 A"/>
    <property type="chains" value="A=698-1040"/>
</dbReference>
<dbReference type="PDB" id="5Q7O">
    <property type="method" value="X-ray"/>
    <property type="resolution" value="1.32 A"/>
    <property type="chains" value="A=698-1040"/>
</dbReference>
<dbReference type="PDB" id="5Q7P">
    <property type="method" value="X-ray"/>
    <property type="resolution" value="2.00 A"/>
    <property type="chains" value="A=698-1040"/>
</dbReference>
<dbReference type="PDB" id="5Q7Q">
    <property type="method" value="X-ray"/>
    <property type="resolution" value="1.76 A"/>
    <property type="chains" value="A=698-1040"/>
</dbReference>
<dbReference type="PDB" id="5Q7R">
    <property type="method" value="X-ray"/>
    <property type="resolution" value="1.62 A"/>
    <property type="chains" value="A=698-1040"/>
</dbReference>
<dbReference type="PDB" id="5Q7S">
    <property type="method" value="X-ray"/>
    <property type="resolution" value="1.31 A"/>
    <property type="chains" value="A=698-1040"/>
</dbReference>
<dbReference type="PDB" id="5Q7T">
    <property type="method" value="X-ray"/>
    <property type="resolution" value="1.67 A"/>
    <property type="chains" value="A=698-1040"/>
</dbReference>
<dbReference type="PDB" id="5Q7U">
    <property type="method" value="X-ray"/>
    <property type="resolution" value="2.11 A"/>
    <property type="chains" value="A=698-1040"/>
</dbReference>
<dbReference type="PDB" id="5Q7V">
    <property type="method" value="X-ray"/>
    <property type="resolution" value="1.62 A"/>
    <property type="chains" value="A=698-1040"/>
</dbReference>
<dbReference type="PDB" id="5Q7W">
    <property type="method" value="X-ray"/>
    <property type="resolution" value="1.27 A"/>
    <property type="chains" value="A=698-1040"/>
</dbReference>
<dbReference type="PDB" id="5Q7X">
    <property type="method" value="X-ray"/>
    <property type="resolution" value="1.69 A"/>
    <property type="chains" value="A=698-1040"/>
</dbReference>
<dbReference type="PDB" id="5Q7Y">
    <property type="method" value="X-ray"/>
    <property type="resolution" value="1.39 A"/>
    <property type="chains" value="A=698-1040"/>
</dbReference>
<dbReference type="PDB" id="5Q7Z">
    <property type="method" value="X-ray"/>
    <property type="resolution" value="1.65 A"/>
    <property type="chains" value="A=698-1040"/>
</dbReference>
<dbReference type="PDB" id="5Q80">
    <property type="method" value="X-ray"/>
    <property type="resolution" value="1.43 A"/>
    <property type="chains" value="A=698-1040"/>
</dbReference>
<dbReference type="PDB" id="5Q81">
    <property type="method" value="X-ray"/>
    <property type="resolution" value="1.51 A"/>
    <property type="chains" value="A=698-1040"/>
</dbReference>
<dbReference type="PDB" id="5Q82">
    <property type="method" value="X-ray"/>
    <property type="resolution" value="1.20 A"/>
    <property type="chains" value="A=698-1040"/>
</dbReference>
<dbReference type="PDB" id="5Q83">
    <property type="method" value="X-ray"/>
    <property type="resolution" value="1.28 A"/>
    <property type="chains" value="A=698-1040"/>
</dbReference>
<dbReference type="PDB" id="5Q84">
    <property type="method" value="X-ray"/>
    <property type="resolution" value="1.88 A"/>
    <property type="chains" value="A=698-1040"/>
</dbReference>
<dbReference type="PDB" id="5Q85">
    <property type="method" value="X-ray"/>
    <property type="resolution" value="1.80 A"/>
    <property type="chains" value="A=698-1040"/>
</dbReference>
<dbReference type="PDB" id="5Q86">
    <property type="method" value="X-ray"/>
    <property type="resolution" value="1.31 A"/>
    <property type="chains" value="A=698-1040"/>
</dbReference>
<dbReference type="PDB" id="5Q87">
    <property type="method" value="X-ray"/>
    <property type="resolution" value="1.34 A"/>
    <property type="chains" value="A=698-1040"/>
</dbReference>
<dbReference type="PDB" id="5Q88">
    <property type="method" value="X-ray"/>
    <property type="resolution" value="1.78 A"/>
    <property type="chains" value="A=698-1040"/>
</dbReference>
<dbReference type="PDB" id="5Q89">
    <property type="method" value="X-ray"/>
    <property type="resolution" value="1.91 A"/>
    <property type="chains" value="A=698-1040"/>
</dbReference>
<dbReference type="PDB" id="5Q8A">
    <property type="method" value="X-ray"/>
    <property type="resolution" value="1.43 A"/>
    <property type="chains" value="A=698-1040"/>
</dbReference>
<dbReference type="PDB" id="5Q8B">
    <property type="method" value="X-ray"/>
    <property type="resolution" value="1.63 A"/>
    <property type="chains" value="A=698-1040"/>
</dbReference>
<dbReference type="PDB" id="5Q8C">
    <property type="method" value="X-ray"/>
    <property type="resolution" value="2.00 A"/>
    <property type="chains" value="A=698-1040"/>
</dbReference>
<dbReference type="PDB" id="5Q8D">
    <property type="method" value="X-ray"/>
    <property type="resolution" value="1.23 A"/>
    <property type="chains" value="A=698-1040"/>
</dbReference>
<dbReference type="PDB" id="5Q8E">
    <property type="method" value="X-ray"/>
    <property type="resolution" value="1.63 A"/>
    <property type="chains" value="A=698-1040"/>
</dbReference>
<dbReference type="PDB" id="5Q8F">
    <property type="method" value="X-ray"/>
    <property type="resolution" value="1.36 A"/>
    <property type="chains" value="A=698-1040"/>
</dbReference>
<dbReference type="PDB" id="5Q8G">
    <property type="method" value="X-ray"/>
    <property type="resolution" value="2.00 A"/>
    <property type="chains" value="A=698-1040"/>
</dbReference>
<dbReference type="PDB" id="5Q8H">
    <property type="method" value="X-ray"/>
    <property type="resolution" value="1.90 A"/>
    <property type="chains" value="A=698-1040"/>
</dbReference>
<dbReference type="PDB" id="5Q8I">
    <property type="method" value="X-ray"/>
    <property type="resolution" value="1.35 A"/>
    <property type="chains" value="A=698-1040"/>
</dbReference>
<dbReference type="PDB" id="5Q8J">
    <property type="method" value="X-ray"/>
    <property type="resolution" value="1.79 A"/>
    <property type="chains" value="A=698-1040"/>
</dbReference>
<dbReference type="PDB" id="5Q8K">
    <property type="method" value="X-ray"/>
    <property type="resolution" value="1.79 A"/>
    <property type="chains" value="A=698-1040"/>
</dbReference>
<dbReference type="PDB" id="5Q8L">
    <property type="method" value="X-ray"/>
    <property type="resolution" value="1.42 A"/>
    <property type="chains" value="A=698-1040"/>
</dbReference>
<dbReference type="PDB" id="5Q8M">
    <property type="method" value="X-ray"/>
    <property type="resolution" value="1.71 A"/>
    <property type="chains" value="A=698-1040"/>
</dbReference>
<dbReference type="PDB" id="5Q8N">
    <property type="method" value="X-ray"/>
    <property type="resolution" value="1.41 A"/>
    <property type="chains" value="A=698-1040"/>
</dbReference>
<dbReference type="PDB" id="5Q8O">
    <property type="method" value="X-ray"/>
    <property type="resolution" value="1.67 A"/>
    <property type="chains" value="A=698-1040"/>
</dbReference>
<dbReference type="PDB" id="5Q8P">
    <property type="method" value="X-ray"/>
    <property type="resolution" value="1.45 A"/>
    <property type="chains" value="A=698-1040"/>
</dbReference>
<dbReference type="PDB" id="5Q8Q">
    <property type="method" value="X-ray"/>
    <property type="resolution" value="1.89 A"/>
    <property type="chains" value="A=698-1040"/>
</dbReference>
<dbReference type="PDB" id="5Q8R">
    <property type="method" value="X-ray"/>
    <property type="resolution" value="1.90 A"/>
    <property type="chains" value="A=698-1040"/>
</dbReference>
<dbReference type="PDB" id="5Q8S">
    <property type="method" value="X-ray"/>
    <property type="resolution" value="1.61 A"/>
    <property type="chains" value="A=698-1040"/>
</dbReference>
<dbReference type="PDB" id="5Q8T">
    <property type="method" value="X-ray"/>
    <property type="resolution" value="2.00 A"/>
    <property type="chains" value="A=698-1040"/>
</dbReference>
<dbReference type="PDB" id="5Q8U">
    <property type="method" value="X-ray"/>
    <property type="resolution" value="1.54 A"/>
    <property type="chains" value="A=698-1040"/>
</dbReference>
<dbReference type="PDB" id="5Q8V">
    <property type="method" value="X-ray"/>
    <property type="resolution" value="1.32 A"/>
    <property type="chains" value="A=698-1040"/>
</dbReference>
<dbReference type="PDB" id="5Q8W">
    <property type="method" value="X-ray"/>
    <property type="resolution" value="1.57 A"/>
    <property type="chains" value="A=698-1040"/>
</dbReference>
<dbReference type="PDB" id="5Q8X">
    <property type="method" value="X-ray"/>
    <property type="resolution" value="1.23 A"/>
    <property type="chains" value="A=698-1040"/>
</dbReference>
<dbReference type="PDB" id="5Q8Y">
    <property type="method" value="X-ray"/>
    <property type="resolution" value="1.51 A"/>
    <property type="chains" value="A=698-1040"/>
</dbReference>
<dbReference type="PDB" id="5Q8Z">
    <property type="method" value="X-ray"/>
    <property type="resolution" value="1.47 A"/>
    <property type="chains" value="A=698-1040"/>
</dbReference>
<dbReference type="PDB" id="5Q90">
    <property type="method" value="X-ray"/>
    <property type="resolution" value="1.49 A"/>
    <property type="chains" value="A=698-1040"/>
</dbReference>
<dbReference type="PDB" id="5Q91">
    <property type="method" value="X-ray"/>
    <property type="resolution" value="1.46 A"/>
    <property type="chains" value="A=698-1040"/>
</dbReference>
<dbReference type="PDB" id="5Q92">
    <property type="method" value="X-ray"/>
    <property type="resolution" value="2.11 A"/>
    <property type="chains" value="A=698-1040"/>
</dbReference>
<dbReference type="PDB" id="5Q93">
    <property type="method" value="X-ray"/>
    <property type="resolution" value="1.68 A"/>
    <property type="chains" value="A=698-1040"/>
</dbReference>
<dbReference type="PDB" id="5Q94">
    <property type="method" value="X-ray"/>
    <property type="resolution" value="1.90 A"/>
    <property type="chains" value="A=698-1040"/>
</dbReference>
<dbReference type="PDB" id="5Q95">
    <property type="method" value="X-ray"/>
    <property type="resolution" value="1.47 A"/>
    <property type="chains" value="A=698-1040"/>
</dbReference>
<dbReference type="PDB" id="5Q96">
    <property type="method" value="X-ray"/>
    <property type="resolution" value="1.83 A"/>
    <property type="chains" value="A=698-1040"/>
</dbReference>
<dbReference type="PDB" id="5Q97">
    <property type="method" value="X-ray"/>
    <property type="resolution" value="1.97 A"/>
    <property type="chains" value="A=698-1040"/>
</dbReference>
<dbReference type="PDB" id="5Q98">
    <property type="method" value="X-ray"/>
    <property type="resolution" value="1.76 A"/>
    <property type="chains" value="A=698-1040"/>
</dbReference>
<dbReference type="PDB" id="5Q99">
    <property type="method" value="X-ray"/>
    <property type="resolution" value="1.31 A"/>
    <property type="chains" value="A=698-1040"/>
</dbReference>
<dbReference type="PDB" id="5Q9A">
    <property type="method" value="X-ray"/>
    <property type="resolution" value="1.67 A"/>
    <property type="chains" value="A=698-1040"/>
</dbReference>
<dbReference type="PDB" id="5Q9B">
    <property type="method" value="X-ray"/>
    <property type="resolution" value="1.45 A"/>
    <property type="chains" value="A=698-1040"/>
</dbReference>
<dbReference type="PDB" id="5Q9C">
    <property type="method" value="X-ray"/>
    <property type="resolution" value="1.46 A"/>
    <property type="chains" value="A=698-1040"/>
</dbReference>
<dbReference type="PDB" id="5Q9D">
    <property type="method" value="X-ray"/>
    <property type="resolution" value="1.69 A"/>
    <property type="chains" value="A=698-1040"/>
</dbReference>
<dbReference type="PDB" id="5Q9E">
    <property type="method" value="X-ray"/>
    <property type="resolution" value="1.45 A"/>
    <property type="chains" value="A=698-1040"/>
</dbReference>
<dbReference type="PDB" id="5Q9F">
    <property type="method" value="X-ray"/>
    <property type="resolution" value="1.28 A"/>
    <property type="chains" value="A=698-1040"/>
</dbReference>
<dbReference type="PDB" id="5Q9G">
    <property type="method" value="X-ray"/>
    <property type="resolution" value="1.60 A"/>
    <property type="chains" value="A=698-1040"/>
</dbReference>
<dbReference type="PDB" id="5Q9H">
    <property type="method" value="X-ray"/>
    <property type="resolution" value="1.81 A"/>
    <property type="chains" value="A=698-1040"/>
</dbReference>
<dbReference type="PDB" id="5Q9I">
    <property type="method" value="X-ray"/>
    <property type="resolution" value="1.46 A"/>
    <property type="chains" value="A=698-1040"/>
</dbReference>
<dbReference type="PDB" id="5Q9J">
    <property type="method" value="X-ray"/>
    <property type="resolution" value="1.76 A"/>
    <property type="chains" value="A=698-1040"/>
</dbReference>
<dbReference type="PDB" id="5Q9K">
    <property type="method" value="X-ray"/>
    <property type="resolution" value="1.78 A"/>
    <property type="chains" value="A=698-1040"/>
</dbReference>
<dbReference type="PDB" id="5Q9L">
    <property type="method" value="X-ray"/>
    <property type="resolution" value="1.59 A"/>
    <property type="chains" value="A=698-1040"/>
</dbReference>
<dbReference type="PDB" id="5Q9M">
    <property type="method" value="X-ray"/>
    <property type="resolution" value="1.30 A"/>
    <property type="chains" value="A=698-1040"/>
</dbReference>
<dbReference type="PDB" id="5Q9N">
    <property type="method" value="X-ray"/>
    <property type="resolution" value="1.47 A"/>
    <property type="chains" value="A=698-1040"/>
</dbReference>
<dbReference type="PDB" id="5Q9O">
    <property type="method" value="X-ray"/>
    <property type="resolution" value="1.37 A"/>
    <property type="chains" value="A=698-1040"/>
</dbReference>
<dbReference type="PDB" id="5Q9P">
    <property type="method" value="X-ray"/>
    <property type="resolution" value="1.48 A"/>
    <property type="chains" value="A=698-1040"/>
</dbReference>
<dbReference type="PDB" id="5Q9Q">
    <property type="method" value="X-ray"/>
    <property type="resolution" value="1.50 A"/>
    <property type="chains" value="A=698-1040"/>
</dbReference>
<dbReference type="PDB" id="5Q9R">
    <property type="method" value="X-ray"/>
    <property type="resolution" value="1.72 A"/>
    <property type="chains" value="A=698-1040"/>
</dbReference>
<dbReference type="PDB" id="5Q9S">
    <property type="method" value="X-ray"/>
    <property type="resolution" value="1.43 A"/>
    <property type="chains" value="A=698-1040"/>
</dbReference>
<dbReference type="PDB" id="5Q9T">
    <property type="method" value="X-ray"/>
    <property type="resolution" value="1.37 A"/>
    <property type="chains" value="A=698-1040"/>
</dbReference>
<dbReference type="PDB" id="5Q9U">
    <property type="method" value="X-ray"/>
    <property type="resolution" value="1.49 A"/>
    <property type="chains" value="A=698-1040"/>
</dbReference>
<dbReference type="PDB" id="5Q9V">
    <property type="method" value="X-ray"/>
    <property type="resolution" value="1.43 A"/>
    <property type="chains" value="A=698-1040"/>
</dbReference>
<dbReference type="PDB" id="5Q9W">
    <property type="method" value="X-ray"/>
    <property type="resolution" value="1.53 A"/>
    <property type="chains" value="A=698-1040"/>
</dbReference>
<dbReference type="PDB" id="5Q9X">
    <property type="method" value="X-ray"/>
    <property type="resolution" value="1.67 A"/>
    <property type="chains" value="A=698-1040"/>
</dbReference>
<dbReference type="PDB" id="5Q9Y">
    <property type="method" value="X-ray"/>
    <property type="resolution" value="1.64 A"/>
    <property type="chains" value="A=698-1040"/>
</dbReference>
<dbReference type="PDB" id="5Q9Z">
    <property type="method" value="X-ray"/>
    <property type="resolution" value="1.77 A"/>
    <property type="chains" value="A=698-1040"/>
</dbReference>
<dbReference type="PDB" id="5QA0">
    <property type="method" value="X-ray"/>
    <property type="resolution" value="1.47 A"/>
    <property type="chains" value="A=698-1040"/>
</dbReference>
<dbReference type="PDB" id="5QA1">
    <property type="method" value="X-ray"/>
    <property type="resolution" value="1.46 A"/>
    <property type="chains" value="A=698-1040"/>
</dbReference>
<dbReference type="PDB" id="5QA2">
    <property type="method" value="X-ray"/>
    <property type="resolution" value="1.56 A"/>
    <property type="chains" value="A=698-1040"/>
</dbReference>
<dbReference type="PDB" id="8C8B">
    <property type="method" value="X-ray"/>
    <property type="resolution" value="1.46 A"/>
    <property type="chains" value="A=698-1040"/>
</dbReference>
<dbReference type="PDB" id="8C8D">
    <property type="method" value="X-ray"/>
    <property type="resolution" value="1.46 A"/>
    <property type="chains" value="A=698-1040"/>
</dbReference>
<dbReference type="PDB" id="8C8S">
    <property type="method" value="X-ray"/>
    <property type="resolution" value="1.80 A"/>
    <property type="chains" value="A=698-1040"/>
</dbReference>
<dbReference type="PDB" id="8CEW">
    <property type="method" value="X-ray"/>
    <property type="resolution" value="1.53 A"/>
    <property type="chains" value="A=696-1040"/>
</dbReference>
<dbReference type="PDB" id="8CF0">
    <property type="method" value="X-ray"/>
    <property type="resolution" value="1.76 A"/>
    <property type="chains" value="A=696-1040"/>
</dbReference>
<dbReference type="PDB" id="8CG9">
    <property type="method" value="X-ray"/>
    <property type="resolution" value="1.68 A"/>
    <property type="chains" value="A=696-1040"/>
</dbReference>
<dbReference type="PDBsum" id="4B87"/>
<dbReference type="PDBsum" id="5AHR"/>
<dbReference type="PDBsum" id="5NZW"/>
<dbReference type="PDBsum" id="5NZX"/>
<dbReference type="PDBsum" id="5NZY"/>
<dbReference type="PDBsum" id="5Q1J"/>
<dbReference type="PDBsum" id="5Q1K"/>
<dbReference type="PDBsum" id="5Q1L"/>
<dbReference type="PDBsum" id="5Q1M"/>
<dbReference type="PDBsum" id="5Q1N"/>
<dbReference type="PDBsum" id="5Q1O"/>
<dbReference type="PDBsum" id="5Q1P"/>
<dbReference type="PDBsum" id="5Q1Q"/>
<dbReference type="PDBsum" id="5Q1R"/>
<dbReference type="PDBsum" id="5Q1S"/>
<dbReference type="PDBsum" id="5Q1T"/>
<dbReference type="PDBsum" id="5Q1U"/>
<dbReference type="PDBsum" id="5Q1V"/>
<dbReference type="PDBsum" id="5Q1W"/>
<dbReference type="PDBsum" id="5Q1X"/>
<dbReference type="PDBsum" id="5Q1Y"/>
<dbReference type="PDBsum" id="5Q1Z"/>
<dbReference type="PDBsum" id="5Q20"/>
<dbReference type="PDBsum" id="5Q22"/>
<dbReference type="PDBsum" id="5Q23"/>
<dbReference type="PDBsum" id="5Q24"/>
<dbReference type="PDBsum" id="5Q25"/>
<dbReference type="PDBsum" id="5Q26"/>
<dbReference type="PDBsum" id="5Q27"/>
<dbReference type="PDBsum" id="5Q28"/>
<dbReference type="PDBsum" id="5Q29"/>
<dbReference type="PDBsum" id="5Q2A"/>
<dbReference type="PDBsum" id="5Q2B"/>
<dbReference type="PDBsum" id="5Q2C"/>
<dbReference type="PDBsum" id="5Q2D"/>
<dbReference type="PDBsum" id="5Q2E"/>
<dbReference type="PDBsum" id="5Q2F"/>
<dbReference type="PDBsum" id="5Q2G"/>
<dbReference type="PDBsum" id="5Q2H"/>
<dbReference type="PDBsum" id="5Q2I"/>
<dbReference type="PDBsum" id="5Q2J"/>
<dbReference type="PDBsum" id="5Q2K"/>
<dbReference type="PDBsum" id="5Q2L"/>
<dbReference type="PDBsum" id="5Q2M"/>
<dbReference type="PDBsum" id="5Q2N"/>
<dbReference type="PDBsum" id="5Q2O"/>
<dbReference type="PDBsum" id="5Q2P"/>
<dbReference type="PDBsum" id="5Q2Q"/>
<dbReference type="PDBsum" id="5Q2R"/>
<dbReference type="PDBsum" id="5Q2S"/>
<dbReference type="PDBsum" id="5Q2T"/>
<dbReference type="PDBsum" id="5Q2U"/>
<dbReference type="PDBsum" id="5Q2V"/>
<dbReference type="PDBsum" id="5Q2W"/>
<dbReference type="PDBsum" id="5Q2X"/>
<dbReference type="PDBsum" id="5Q2Y"/>
<dbReference type="PDBsum" id="5Q2Z"/>
<dbReference type="PDBsum" id="5Q30"/>
<dbReference type="PDBsum" id="5Q31"/>
<dbReference type="PDBsum" id="5Q32"/>
<dbReference type="PDBsum" id="5Q33"/>
<dbReference type="PDBsum" id="5Q34"/>
<dbReference type="PDBsum" id="5Q35"/>
<dbReference type="PDBsum" id="5Q36"/>
<dbReference type="PDBsum" id="5Q37"/>
<dbReference type="PDBsum" id="5Q38"/>
<dbReference type="PDBsum" id="5Q39"/>
<dbReference type="PDBsum" id="5Q3A"/>
<dbReference type="PDBsum" id="5Q3B"/>
<dbReference type="PDBsum" id="5Q3C"/>
<dbReference type="PDBsum" id="5Q3D"/>
<dbReference type="PDBsum" id="5Q3E"/>
<dbReference type="PDBsum" id="5Q3F"/>
<dbReference type="PDBsum" id="5Q3G"/>
<dbReference type="PDBsum" id="5Q3H"/>
<dbReference type="PDBsum" id="5Q3I"/>
<dbReference type="PDBsum" id="5Q3J"/>
<dbReference type="PDBsum" id="5Q3K"/>
<dbReference type="PDBsum" id="5Q3L"/>
<dbReference type="PDBsum" id="5Q3M"/>
<dbReference type="PDBsum" id="5Q3N"/>
<dbReference type="PDBsum" id="5Q3O"/>
<dbReference type="PDBsum" id="5Q3P"/>
<dbReference type="PDBsum" id="5Q3Q"/>
<dbReference type="PDBsum" id="5Q3R"/>
<dbReference type="PDBsum" id="5Q3S"/>
<dbReference type="PDBsum" id="5Q3T"/>
<dbReference type="PDBsum" id="5Q3U"/>
<dbReference type="PDBsum" id="5Q3V"/>
<dbReference type="PDBsum" id="5Q3W"/>
<dbReference type="PDBsum" id="5Q3X"/>
<dbReference type="PDBsum" id="5Q3Y"/>
<dbReference type="PDBsum" id="5Q3Z"/>
<dbReference type="PDBsum" id="5Q40"/>
<dbReference type="PDBsum" id="5Q41"/>
<dbReference type="PDBsum" id="5Q42"/>
<dbReference type="PDBsum" id="5Q43"/>
<dbReference type="PDBsum" id="5Q44"/>
<dbReference type="PDBsum" id="5Q45"/>
<dbReference type="PDBsum" id="5Q46"/>
<dbReference type="PDBsum" id="5Q47"/>
<dbReference type="PDBsum" id="5Q48"/>
<dbReference type="PDBsum" id="5Q49"/>
<dbReference type="PDBsum" id="5Q4A"/>
<dbReference type="PDBsum" id="5Q4B"/>
<dbReference type="PDBsum" id="5Q4C"/>
<dbReference type="PDBsum" id="5Q4D"/>
<dbReference type="PDBsum" id="5Q4E"/>
<dbReference type="PDBsum" id="5Q4F"/>
<dbReference type="PDBsum" id="5Q4G"/>
<dbReference type="PDBsum" id="5Q4H"/>
<dbReference type="PDBsum" id="5Q4I"/>
<dbReference type="PDBsum" id="5Q4J"/>
<dbReference type="PDBsum" id="5Q4K"/>
<dbReference type="PDBsum" id="5Q4L"/>
<dbReference type="PDBsum" id="5Q4M"/>
<dbReference type="PDBsum" id="5Q4N"/>
<dbReference type="PDBsum" id="5Q4O"/>
<dbReference type="PDBsum" id="5Q4P"/>
<dbReference type="PDBsum" id="5Q4Q"/>
<dbReference type="PDBsum" id="5Q4R"/>
<dbReference type="PDBsum" id="5Q4S"/>
<dbReference type="PDBsum" id="5Q4T"/>
<dbReference type="PDBsum" id="5Q4U"/>
<dbReference type="PDBsum" id="5Q4V"/>
<dbReference type="PDBsum" id="5Q4W"/>
<dbReference type="PDBsum" id="5Q4X"/>
<dbReference type="PDBsum" id="5Q4Y"/>
<dbReference type="PDBsum" id="5Q4Z"/>
<dbReference type="PDBsum" id="5Q50"/>
<dbReference type="PDBsum" id="5Q51"/>
<dbReference type="PDBsum" id="5Q52"/>
<dbReference type="PDBsum" id="5Q53"/>
<dbReference type="PDBsum" id="5Q54"/>
<dbReference type="PDBsum" id="5Q55"/>
<dbReference type="PDBsum" id="5Q56"/>
<dbReference type="PDBsum" id="5Q57"/>
<dbReference type="PDBsum" id="5Q58"/>
<dbReference type="PDBsum" id="5Q59"/>
<dbReference type="PDBsum" id="5Q5A"/>
<dbReference type="PDBsum" id="5Q5B"/>
<dbReference type="PDBsum" id="5Q5C"/>
<dbReference type="PDBsum" id="5Q5D"/>
<dbReference type="PDBsum" id="5Q5E"/>
<dbReference type="PDBsum" id="5Q5F"/>
<dbReference type="PDBsum" id="5Q5G"/>
<dbReference type="PDBsum" id="5Q5H"/>
<dbReference type="PDBsum" id="5Q5I"/>
<dbReference type="PDBsum" id="5Q5J"/>
<dbReference type="PDBsum" id="5Q5K"/>
<dbReference type="PDBsum" id="5Q5L"/>
<dbReference type="PDBsum" id="5Q5M"/>
<dbReference type="PDBsum" id="5Q5N"/>
<dbReference type="PDBsum" id="5Q5O"/>
<dbReference type="PDBsum" id="5Q5P"/>
<dbReference type="PDBsum" id="5Q5Q"/>
<dbReference type="PDBsum" id="5Q5R"/>
<dbReference type="PDBsum" id="5Q5S"/>
<dbReference type="PDBsum" id="5Q5T"/>
<dbReference type="PDBsum" id="5Q5U"/>
<dbReference type="PDBsum" id="5Q5V"/>
<dbReference type="PDBsum" id="5Q5W"/>
<dbReference type="PDBsum" id="5Q5X"/>
<dbReference type="PDBsum" id="5Q5Y"/>
<dbReference type="PDBsum" id="5Q5Z"/>
<dbReference type="PDBsum" id="5Q60"/>
<dbReference type="PDBsum" id="5Q61"/>
<dbReference type="PDBsum" id="5Q62"/>
<dbReference type="PDBsum" id="5Q63"/>
<dbReference type="PDBsum" id="5Q64"/>
<dbReference type="PDBsum" id="5Q65"/>
<dbReference type="PDBsum" id="5Q66"/>
<dbReference type="PDBsum" id="5Q67"/>
<dbReference type="PDBsum" id="5Q68"/>
<dbReference type="PDBsum" id="5Q69"/>
<dbReference type="PDBsum" id="5Q6A"/>
<dbReference type="PDBsum" id="5Q6B"/>
<dbReference type="PDBsum" id="5Q6C"/>
<dbReference type="PDBsum" id="5Q6D"/>
<dbReference type="PDBsum" id="5Q6E"/>
<dbReference type="PDBsum" id="5Q6F"/>
<dbReference type="PDBsum" id="5Q6G"/>
<dbReference type="PDBsum" id="5Q6H"/>
<dbReference type="PDBsum" id="5Q6I"/>
<dbReference type="PDBsum" id="5Q6J"/>
<dbReference type="PDBsum" id="5Q6K"/>
<dbReference type="PDBsum" id="5Q6L"/>
<dbReference type="PDBsum" id="5Q6M"/>
<dbReference type="PDBsum" id="5Q6N"/>
<dbReference type="PDBsum" id="5Q6O"/>
<dbReference type="PDBsum" id="5Q6P"/>
<dbReference type="PDBsum" id="5Q6Q"/>
<dbReference type="PDBsum" id="5Q6R"/>
<dbReference type="PDBsum" id="5Q6S"/>
<dbReference type="PDBsum" id="5Q6T"/>
<dbReference type="PDBsum" id="5Q6U"/>
<dbReference type="PDBsum" id="5Q6V"/>
<dbReference type="PDBsum" id="5Q6W"/>
<dbReference type="PDBsum" id="5Q6X"/>
<dbReference type="PDBsum" id="5Q6Y"/>
<dbReference type="PDBsum" id="5Q6Z"/>
<dbReference type="PDBsum" id="5Q70"/>
<dbReference type="PDBsum" id="5Q71"/>
<dbReference type="PDBsum" id="5Q72"/>
<dbReference type="PDBsum" id="5Q73"/>
<dbReference type="PDBsum" id="5Q74"/>
<dbReference type="PDBsum" id="5Q75"/>
<dbReference type="PDBsum" id="5Q76"/>
<dbReference type="PDBsum" id="5Q77"/>
<dbReference type="PDBsum" id="5Q78"/>
<dbReference type="PDBsum" id="5Q79"/>
<dbReference type="PDBsum" id="5Q7A"/>
<dbReference type="PDBsum" id="5Q7B"/>
<dbReference type="PDBsum" id="5Q7C"/>
<dbReference type="PDBsum" id="5Q7D"/>
<dbReference type="PDBsum" id="5Q7E"/>
<dbReference type="PDBsum" id="5Q7F"/>
<dbReference type="PDBsum" id="5Q7G"/>
<dbReference type="PDBsum" id="5Q7H"/>
<dbReference type="PDBsum" id="5Q7I"/>
<dbReference type="PDBsum" id="5Q7J"/>
<dbReference type="PDBsum" id="5Q7K"/>
<dbReference type="PDBsum" id="5Q7L"/>
<dbReference type="PDBsum" id="5Q7M"/>
<dbReference type="PDBsum" id="5Q7N"/>
<dbReference type="PDBsum" id="5Q7O"/>
<dbReference type="PDBsum" id="5Q7P"/>
<dbReference type="PDBsum" id="5Q7Q"/>
<dbReference type="PDBsum" id="5Q7R"/>
<dbReference type="PDBsum" id="5Q7S"/>
<dbReference type="PDBsum" id="5Q7T"/>
<dbReference type="PDBsum" id="5Q7U"/>
<dbReference type="PDBsum" id="5Q7V"/>
<dbReference type="PDBsum" id="5Q7W"/>
<dbReference type="PDBsum" id="5Q7X"/>
<dbReference type="PDBsum" id="5Q7Y"/>
<dbReference type="PDBsum" id="5Q7Z"/>
<dbReference type="PDBsum" id="5Q80"/>
<dbReference type="PDBsum" id="5Q81"/>
<dbReference type="PDBsum" id="5Q82"/>
<dbReference type="PDBsum" id="5Q83"/>
<dbReference type="PDBsum" id="5Q84"/>
<dbReference type="PDBsum" id="5Q85"/>
<dbReference type="PDBsum" id="5Q86"/>
<dbReference type="PDBsum" id="5Q87"/>
<dbReference type="PDBsum" id="5Q88"/>
<dbReference type="PDBsum" id="5Q89"/>
<dbReference type="PDBsum" id="5Q8A"/>
<dbReference type="PDBsum" id="5Q8B"/>
<dbReference type="PDBsum" id="5Q8C"/>
<dbReference type="PDBsum" id="5Q8D"/>
<dbReference type="PDBsum" id="5Q8E"/>
<dbReference type="PDBsum" id="5Q8F"/>
<dbReference type="PDBsum" id="5Q8G"/>
<dbReference type="PDBsum" id="5Q8H"/>
<dbReference type="PDBsum" id="5Q8I"/>
<dbReference type="PDBsum" id="5Q8J"/>
<dbReference type="PDBsum" id="5Q8K"/>
<dbReference type="PDBsum" id="5Q8L"/>
<dbReference type="PDBsum" id="5Q8M"/>
<dbReference type="PDBsum" id="5Q8N"/>
<dbReference type="PDBsum" id="5Q8O"/>
<dbReference type="PDBsum" id="5Q8P"/>
<dbReference type="PDBsum" id="5Q8Q"/>
<dbReference type="PDBsum" id="5Q8R"/>
<dbReference type="PDBsum" id="5Q8S"/>
<dbReference type="PDBsum" id="5Q8T"/>
<dbReference type="PDBsum" id="5Q8U"/>
<dbReference type="PDBsum" id="5Q8V"/>
<dbReference type="PDBsum" id="5Q8W"/>
<dbReference type="PDBsum" id="5Q8X"/>
<dbReference type="PDBsum" id="5Q8Y"/>
<dbReference type="PDBsum" id="5Q8Z"/>
<dbReference type="PDBsum" id="5Q90"/>
<dbReference type="PDBsum" id="5Q91"/>
<dbReference type="PDBsum" id="5Q92"/>
<dbReference type="PDBsum" id="5Q93"/>
<dbReference type="PDBsum" id="5Q94"/>
<dbReference type="PDBsum" id="5Q95"/>
<dbReference type="PDBsum" id="5Q96"/>
<dbReference type="PDBsum" id="5Q97"/>
<dbReference type="PDBsum" id="5Q98"/>
<dbReference type="PDBsum" id="5Q99"/>
<dbReference type="PDBsum" id="5Q9A"/>
<dbReference type="PDBsum" id="5Q9B"/>
<dbReference type="PDBsum" id="5Q9C"/>
<dbReference type="PDBsum" id="5Q9D"/>
<dbReference type="PDBsum" id="5Q9E"/>
<dbReference type="PDBsum" id="5Q9F"/>
<dbReference type="PDBsum" id="5Q9G"/>
<dbReference type="PDBsum" id="5Q9H"/>
<dbReference type="PDBsum" id="5Q9I"/>
<dbReference type="PDBsum" id="5Q9J"/>
<dbReference type="PDBsum" id="5Q9K"/>
<dbReference type="PDBsum" id="5Q9L"/>
<dbReference type="PDBsum" id="5Q9M"/>
<dbReference type="PDBsum" id="5Q9N"/>
<dbReference type="PDBsum" id="5Q9O"/>
<dbReference type="PDBsum" id="5Q9P"/>
<dbReference type="PDBsum" id="5Q9Q"/>
<dbReference type="PDBsum" id="5Q9R"/>
<dbReference type="PDBsum" id="5Q9S"/>
<dbReference type="PDBsum" id="5Q9T"/>
<dbReference type="PDBsum" id="5Q9U"/>
<dbReference type="PDBsum" id="5Q9V"/>
<dbReference type="PDBsum" id="5Q9W"/>
<dbReference type="PDBsum" id="5Q9X"/>
<dbReference type="PDBsum" id="5Q9Y"/>
<dbReference type="PDBsum" id="5Q9Z"/>
<dbReference type="PDBsum" id="5QA0"/>
<dbReference type="PDBsum" id="5QA1"/>
<dbReference type="PDBsum" id="5QA2"/>
<dbReference type="PDBsum" id="8C8B"/>
<dbReference type="PDBsum" id="8C8D"/>
<dbReference type="PDBsum" id="8C8S"/>
<dbReference type="PDBsum" id="8CEW"/>
<dbReference type="PDBsum" id="8CF0"/>
<dbReference type="PDBsum" id="8CG9"/>
<dbReference type="SMR" id="Q6PJP8"/>
<dbReference type="BioGRID" id="115263">
    <property type="interactions" value="28"/>
</dbReference>
<dbReference type="FunCoup" id="Q6PJP8">
    <property type="interactions" value="1577"/>
</dbReference>
<dbReference type="IntAct" id="Q6PJP8">
    <property type="interactions" value="7"/>
</dbReference>
<dbReference type="MINT" id="Q6PJP8"/>
<dbReference type="STRING" id="9606.ENSP00000355185"/>
<dbReference type="BindingDB" id="Q6PJP8"/>
<dbReference type="ChEMBL" id="CHEMBL4105903"/>
<dbReference type="iPTMnet" id="Q6PJP8"/>
<dbReference type="PhosphoSitePlus" id="Q6PJP8"/>
<dbReference type="BioMuta" id="DCLRE1A"/>
<dbReference type="DMDM" id="311033461"/>
<dbReference type="jPOST" id="Q6PJP8"/>
<dbReference type="MassIVE" id="Q6PJP8"/>
<dbReference type="PaxDb" id="9606-ENSP00000355185"/>
<dbReference type="PeptideAtlas" id="Q6PJP8"/>
<dbReference type="ProteomicsDB" id="67214"/>
<dbReference type="Pumba" id="Q6PJP8"/>
<dbReference type="Antibodypedia" id="31894">
    <property type="antibodies" value="106 antibodies from 21 providers"/>
</dbReference>
<dbReference type="DNASU" id="9937"/>
<dbReference type="Ensembl" id="ENST00000361384.7">
    <property type="protein sequence ID" value="ENSP00000355185.2"/>
    <property type="gene ID" value="ENSG00000198924.8"/>
</dbReference>
<dbReference type="Ensembl" id="ENST00000369305.1">
    <property type="protein sequence ID" value="ENSP00000358311.1"/>
    <property type="gene ID" value="ENSG00000198924.8"/>
</dbReference>
<dbReference type="GeneID" id="9937"/>
<dbReference type="KEGG" id="hsa:9937"/>
<dbReference type="MANE-Select" id="ENST00000361384.7">
    <property type="protein sequence ID" value="ENSP00000355185.2"/>
    <property type="RefSeq nucleotide sequence ID" value="NM_014881.5"/>
    <property type="RefSeq protein sequence ID" value="NP_055696.3"/>
</dbReference>
<dbReference type="UCSC" id="uc001law.4">
    <property type="organism name" value="human"/>
</dbReference>
<dbReference type="AGR" id="HGNC:17660"/>
<dbReference type="CTD" id="9937"/>
<dbReference type="DisGeNET" id="9937"/>
<dbReference type="GeneCards" id="DCLRE1A"/>
<dbReference type="HGNC" id="HGNC:17660">
    <property type="gene designation" value="DCLRE1A"/>
</dbReference>
<dbReference type="HPA" id="ENSG00000198924">
    <property type="expression patterns" value="Low tissue specificity"/>
</dbReference>
<dbReference type="MIM" id="609682">
    <property type="type" value="gene"/>
</dbReference>
<dbReference type="neXtProt" id="NX_Q6PJP8"/>
<dbReference type="OpenTargets" id="ENSG00000198924"/>
<dbReference type="PharmGKB" id="PA27174"/>
<dbReference type="VEuPathDB" id="HostDB:ENSG00000198924"/>
<dbReference type="eggNOG" id="KOG1361">
    <property type="taxonomic scope" value="Eukaryota"/>
</dbReference>
<dbReference type="GeneTree" id="ENSGT00940000158766"/>
<dbReference type="HOGENOM" id="CLU_014243_0_0_1"/>
<dbReference type="InParanoid" id="Q6PJP8"/>
<dbReference type="OMA" id="FRFPIYC"/>
<dbReference type="OrthoDB" id="262529at2759"/>
<dbReference type="PAN-GO" id="Q6PJP8">
    <property type="GO annotations" value="5 GO annotations based on evolutionary models"/>
</dbReference>
<dbReference type="PhylomeDB" id="Q6PJP8"/>
<dbReference type="TreeFam" id="TF314510"/>
<dbReference type="PathwayCommons" id="Q6PJP8"/>
<dbReference type="Reactome" id="R-HSA-6783310">
    <property type="pathway name" value="Fanconi Anemia Pathway"/>
</dbReference>
<dbReference type="SignaLink" id="Q6PJP8"/>
<dbReference type="BioGRID-ORCS" id="9937">
    <property type="hits" value="20 hits in 1161 CRISPR screens"/>
</dbReference>
<dbReference type="ChiTaRS" id="DCLRE1A">
    <property type="organism name" value="human"/>
</dbReference>
<dbReference type="EvolutionaryTrace" id="Q6PJP8"/>
<dbReference type="GeneWiki" id="DCLRE1A"/>
<dbReference type="GenomeRNAi" id="9937"/>
<dbReference type="Pharos" id="Q6PJP8">
    <property type="development level" value="Tbio"/>
</dbReference>
<dbReference type="PRO" id="PR:Q6PJP8"/>
<dbReference type="Proteomes" id="UP000005640">
    <property type="component" value="Chromosome 10"/>
</dbReference>
<dbReference type="RNAct" id="Q6PJP8">
    <property type="molecule type" value="protein"/>
</dbReference>
<dbReference type="Bgee" id="ENSG00000198924">
    <property type="expression patterns" value="Expressed in secondary oocyte and 137 other cell types or tissues"/>
</dbReference>
<dbReference type="GO" id="GO:0001650">
    <property type="term" value="C:fibrillar center"/>
    <property type="evidence" value="ECO:0000314"/>
    <property type="project" value="HPA"/>
</dbReference>
<dbReference type="GO" id="GO:0005654">
    <property type="term" value="C:nucleoplasm"/>
    <property type="evidence" value="ECO:0000314"/>
    <property type="project" value="HPA"/>
</dbReference>
<dbReference type="GO" id="GO:0035312">
    <property type="term" value="F:5'-3' DNA exonuclease activity"/>
    <property type="evidence" value="ECO:0000314"/>
    <property type="project" value="CACAO"/>
</dbReference>
<dbReference type="GO" id="GO:0008800">
    <property type="term" value="F:beta-lactamase activity"/>
    <property type="evidence" value="ECO:0000314"/>
    <property type="project" value="UniProtKB"/>
</dbReference>
<dbReference type="GO" id="GO:0003684">
    <property type="term" value="F:damaged DNA binding"/>
    <property type="evidence" value="ECO:0000318"/>
    <property type="project" value="GO_Central"/>
</dbReference>
<dbReference type="GO" id="GO:0008270">
    <property type="term" value="F:zinc ion binding"/>
    <property type="evidence" value="ECO:0007669"/>
    <property type="project" value="UniProtKB-KW"/>
</dbReference>
<dbReference type="GO" id="GO:0051301">
    <property type="term" value="P:cell division"/>
    <property type="evidence" value="ECO:0007669"/>
    <property type="project" value="UniProtKB-KW"/>
</dbReference>
<dbReference type="GO" id="GO:0006303">
    <property type="term" value="P:double-strand break repair via nonhomologous end joining"/>
    <property type="evidence" value="ECO:0000318"/>
    <property type="project" value="GO_Central"/>
</dbReference>
<dbReference type="GO" id="GO:0036297">
    <property type="term" value="P:interstrand cross-link repair"/>
    <property type="evidence" value="ECO:0000318"/>
    <property type="project" value="GO_Central"/>
</dbReference>
<dbReference type="CDD" id="cd16298">
    <property type="entry name" value="SNM1A-like_MBL-fold"/>
    <property type="match status" value="1"/>
</dbReference>
<dbReference type="FunFam" id="3.40.50.12650:FF:000001">
    <property type="entry name" value="DNA cross-link repair 1A"/>
    <property type="match status" value="1"/>
</dbReference>
<dbReference type="FunFam" id="3.60.15.10:FF:000010">
    <property type="entry name" value="DNA cross-link repair 1A"/>
    <property type="match status" value="1"/>
</dbReference>
<dbReference type="Gene3D" id="3.40.50.12650">
    <property type="match status" value="1"/>
</dbReference>
<dbReference type="Gene3D" id="3.60.15.10">
    <property type="entry name" value="Ribonuclease Z/Hydroxyacylglutathione hydrolase-like"/>
    <property type="match status" value="1"/>
</dbReference>
<dbReference type="InterPro" id="IPR011084">
    <property type="entry name" value="DRMBL"/>
</dbReference>
<dbReference type="InterPro" id="IPR006642">
    <property type="entry name" value="Rad18_UBZ4"/>
</dbReference>
<dbReference type="InterPro" id="IPR036866">
    <property type="entry name" value="RibonucZ/Hydroxyglut_hydro"/>
</dbReference>
<dbReference type="PANTHER" id="PTHR23240:SF6">
    <property type="entry name" value="DNA CROSS-LINK REPAIR 1A PROTEIN"/>
    <property type="match status" value="1"/>
</dbReference>
<dbReference type="PANTHER" id="PTHR23240">
    <property type="entry name" value="DNA CROSS-LINK REPAIR PROTEIN PSO2/SNM1-RELATED"/>
    <property type="match status" value="1"/>
</dbReference>
<dbReference type="Pfam" id="PF07522">
    <property type="entry name" value="DRMBL"/>
    <property type="match status" value="1"/>
</dbReference>
<dbReference type="SUPFAM" id="SSF56281">
    <property type="entry name" value="Metallo-hydrolase/oxidoreductase"/>
    <property type="match status" value="1"/>
</dbReference>
<dbReference type="PROSITE" id="PS51908">
    <property type="entry name" value="ZF_UBZ4"/>
    <property type="match status" value="1"/>
</dbReference>
<reference key="1">
    <citation type="journal article" date="1995" name="DNA Res.">
        <title>Prediction of the coding sequences of unidentified human genes. III. The coding sequences of 40 new genes (KIAA0081-KIAA0120) deduced by analysis of cDNA clones from human cell line KG-1.</title>
        <authorList>
            <person name="Nagase T."/>
            <person name="Miyajima N."/>
            <person name="Tanaka A."/>
            <person name="Sazuka T."/>
            <person name="Seki N."/>
            <person name="Sato S."/>
            <person name="Tabata S."/>
            <person name="Ishikawa K."/>
            <person name="Kawarabayasi Y."/>
            <person name="Kotani H."/>
            <person name="Nomura N."/>
        </authorList>
    </citation>
    <scope>NUCLEOTIDE SEQUENCE [LARGE SCALE MRNA]</scope>
    <source>
        <tissue>Bone marrow</tissue>
    </source>
</reference>
<reference key="2">
    <citation type="submission" date="2004-04" db="EMBL/GenBank/DDBJ databases">
        <authorList>
            <consortium name="NIEHS SNPs program"/>
        </authorList>
    </citation>
    <scope>NUCLEOTIDE SEQUENCE [GENOMIC DNA]</scope>
    <scope>VARIANTS GLU-58; ASP-59; ASP-71; LEU-287; HIS-317 AND PHE-859</scope>
</reference>
<reference key="3">
    <citation type="journal article" date="2004" name="Nature">
        <title>The DNA sequence and comparative analysis of human chromosome 10.</title>
        <authorList>
            <person name="Deloukas P."/>
            <person name="Earthrowl M.E."/>
            <person name="Grafham D.V."/>
            <person name="Rubenfield M."/>
            <person name="French L."/>
            <person name="Steward C.A."/>
            <person name="Sims S.K."/>
            <person name="Jones M.C."/>
            <person name="Searle S."/>
            <person name="Scott C."/>
            <person name="Howe K."/>
            <person name="Hunt S.E."/>
            <person name="Andrews T.D."/>
            <person name="Gilbert J.G.R."/>
            <person name="Swarbreck D."/>
            <person name="Ashurst J.L."/>
            <person name="Taylor A."/>
            <person name="Battles J."/>
            <person name="Bird C.P."/>
            <person name="Ainscough R."/>
            <person name="Almeida J.P."/>
            <person name="Ashwell R.I.S."/>
            <person name="Ambrose K.D."/>
            <person name="Babbage A.K."/>
            <person name="Bagguley C.L."/>
            <person name="Bailey J."/>
            <person name="Banerjee R."/>
            <person name="Bates K."/>
            <person name="Beasley H."/>
            <person name="Bray-Allen S."/>
            <person name="Brown A.J."/>
            <person name="Brown J.Y."/>
            <person name="Burford D.C."/>
            <person name="Burrill W."/>
            <person name="Burton J."/>
            <person name="Cahill P."/>
            <person name="Camire D."/>
            <person name="Carter N.P."/>
            <person name="Chapman J.C."/>
            <person name="Clark S.Y."/>
            <person name="Clarke G."/>
            <person name="Clee C.M."/>
            <person name="Clegg S."/>
            <person name="Corby N."/>
            <person name="Coulson A."/>
            <person name="Dhami P."/>
            <person name="Dutta I."/>
            <person name="Dunn M."/>
            <person name="Faulkner L."/>
            <person name="Frankish A."/>
            <person name="Frankland J.A."/>
            <person name="Garner P."/>
            <person name="Garnett J."/>
            <person name="Gribble S."/>
            <person name="Griffiths C."/>
            <person name="Grocock R."/>
            <person name="Gustafson E."/>
            <person name="Hammond S."/>
            <person name="Harley J.L."/>
            <person name="Hart E."/>
            <person name="Heath P.D."/>
            <person name="Ho T.P."/>
            <person name="Hopkins B."/>
            <person name="Horne J."/>
            <person name="Howden P.J."/>
            <person name="Huckle E."/>
            <person name="Hynds C."/>
            <person name="Johnson C."/>
            <person name="Johnson D."/>
            <person name="Kana A."/>
            <person name="Kay M."/>
            <person name="Kimberley A.M."/>
            <person name="Kershaw J.K."/>
            <person name="Kokkinaki M."/>
            <person name="Laird G.K."/>
            <person name="Lawlor S."/>
            <person name="Lee H.M."/>
            <person name="Leongamornlert D.A."/>
            <person name="Laird G."/>
            <person name="Lloyd C."/>
            <person name="Lloyd D.M."/>
            <person name="Loveland J."/>
            <person name="Lovell J."/>
            <person name="McLaren S."/>
            <person name="McLay K.E."/>
            <person name="McMurray A."/>
            <person name="Mashreghi-Mohammadi M."/>
            <person name="Matthews L."/>
            <person name="Milne S."/>
            <person name="Nickerson T."/>
            <person name="Nguyen M."/>
            <person name="Overton-Larty E."/>
            <person name="Palmer S.A."/>
            <person name="Pearce A.V."/>
            <person name="Peck A.I."/>
            <person name="Pelan S."/>
            <person name="Phillimore B."/>
            <person name="Porter K."/>
            <person name="Rice C.M."/>
            <person name="Rogosin A."/>
            <person name="Ross M.T."/>
            <person name="Sarafidou T."/>
            <person name="Sehra H.K."/>
            <person name="Shownkeen R."/>
            <person name="Skuce C.D."/>
            <person name="Smith M."/>
            <person name="Standring L."/>
            <person name="Sycamore N."/>
            <person name="Tester J."/>
            <person name="Thorpe A."/>
            <person name="Torcasso W."/>
            <person name="Tracey A."/>
            <person name="Tromans A."/>
            <person name="Tsolas J."/>
            <person name="Wall M."/>
            <person name="Walsh J."/>
            <person name="Wang H."/>
            <person name="Weinstock K."/>
            <person name="West A.P."/>
            <person name="Willey D.L."/>
            <person name="Whitehead S.L."/>
            <person name="Wilming L."/>
            <person name="Wray P.W."/>
            <person name="Young L."/>
            <person name="Chen Y."/>
            <person name="Lovering R.C."/>
            <person name="Moschonas N.K."/>
            <person name="Siebert R."/>
            <person name="Fechtel K."/>
            <person name="Bentley D."/>
            <person name="Durbin R.M."/>
            <person name="Hubbard T."/>
            <person name="Doucette-Stamm L."/>
            <person name="Beck S."/>
            <person name="Smith D.R."/>
            <person name="Rogers J."/>
        </authorList>
    </citation>
    <scope>NUCLEOTIDE SEQUENCE [LARGE SCALE GENOMIC DNA]</scope>
</reference>
<reference key="4">
    <citation type="submission" date="2005-09" db="EMBL/GenBank/DDBJ databases">
        <authorList>
            <person name="Mural R.J."/>
            <person name="Istrail S."/>
            <person name="Sutton G.G."/>
            <person name="Florea L."/>
            <person name="Halpern A.L."/>
            <person name="Mobarry C.M."/>
            <person name="Lippert R."/>
            <person name="Walenz B."/>
            <person name="Shatkay H."/>
            <person name="Dew I."/>
            <person name="Miller J.R."/>
            <person name="Flanigan M.J."/>
            <person name="Edwards N.J."/>
            <person name="Bolanos R."/>
            <person name="Fasulo D."/>
            <person name="Halldorsson B.V."/>
            <person name="Hannenhalli S."/>
            <person name="Turner R."/>
            <person name="Yooseph S."/>
            <person name="Lu F."/>
            <person name="Nusskern D.R."/>
            <person name="Shue B.C."/>
            <person name="Zheng X.H."/>
            <person name="Zhong F."/>
            <person name="Delcher A.L."/>
            <person name="Huson D.H."/>
            <person name="Kravitz S.A."/>
            <person name="Mouchard L."/>
            <person name="Reinert K."/>
            <person name="Remington K.A."/>
            <person name="Clark A.G."/>
            <person name="Waterman M.S."/>
            <person name="Eichler E.E."/>
            <person name="Adams M.D."/>
            <person name="Hunkapiller M.W."/>
            <person name="Myers E.W."/>
            <person name="Venter J.C."/>
        </authorList>
    </citation>
    <scope>NUCLEOTIDE SEQUENCE [LARGE SCALE GENOMIC DNA]</scope>
    <scope>VARIANT HIS-317</scope>
</reference>
<reference key="5">
    <citation type="journal article" date="2004" name="Genome Res.">
        <title>The status, quality, and expansion of the NIH full-length cDNA project: the Mammalian Gene Collection (MGC).</title>
        <authorList>
            <consortium name="The MGC Project Team"/>
        </authorList>
    </citation>
    <scope>NUCLEOTIDE SEQUENCE [LARGE SCALE MRNA]</scope>
    <scope>VARIANTS HIS-317 AND TRP-582</scope>
    <source>
        <tissue>Cervix</tissue>
        <tissue>Lung</tissue>
    </source>
</reference>
<reference key="6">
    <citation type="journal article" date="2000" name="Mol. Cell. Biol.">
        <title>Disruption of mouse SNM1 causes increased sensitivity to the DNA interstrand cross-linking agent mitomycin C.</title>
        <authorList>
            <person name="Dronkert M.L.G."/>
            <person name="de Wit J."/>
            <person name="Boeve M."/>
            <person name="Vasconcelos M.L."/>
            <person name="van Steeg H."/>
            <person name="Tan T.L.R."/>
            <person name="Hoeijmakers J.H.J."/>
            <person name="Kanaar R."/>
        </authorList>
    </citation>
    <scope>SUBCELLULAR LOCATION</scope>
</reference>
<reference key="7">
    <citation type="journal article" date="2002" name="DNA Repair">
        <title>Translation of hSNM1 is mediated by an internal ribosome entry site that upregulates expression during mitosis.</title>
        <authorList>
            <person name="Zhang X."/>
            <person name="Richie C."/>
            <person name="Legerski R.J."/>
        </authorList>
    </citation>
    <scope>INDUCTION</scope>
</reference>
<reference key="8">
    <citation type="journal article" date="2002" name="Mol. Cell. Biol.">
        <title>hSnm1 colocalizes and physically associates with 53BP1 before and after DNA damage.</title>
        <authorList>
            <person name="Richie C.T."/>
            <person name="Peterson C."/>
            <person name="Lu T."/>
            <person name="Hittelman W.N."/>
            <person name="Carpenter P.B."/>
            <person name="Legerski R.J."/>
        </authorList>
    </citation>
    <scope>INTERACTION WITH TP53BP1</scope>
    <scope>SUBCELLULAR LOCATION</scope>
    <scope>TISSUE SPECIFICITY</scope>
</reference>
<reference key="9">
    <citation type="journal article" date="2004" name="Mol. Cell. Biol.">
        <title>Deficiency in SNM1 abolishes an early mitotic checkpoint induced by spindle stress.</title>
        <authorList>
            <person name="Akhter S."/>
            <person name="Richie C.T."/>
            <person name="Deng J.M."/>
            <person name="Brey E."/>
            <person name="Zhang X."/>
            <person name="Patrick C. Jr."/>
            <person name="Behringer R.R."/>
            <person name="Legerski R.J."/>
        </authorList>
    </citation>
    <scope>FUNCTION</scope>
    <scope>INTERACTION WITH CDC27</scope>
</reference>
<reference key="10">
    <citation type="journal article" date="2004" name="Mol. Cell. Biol.">
        <title>DNA cross-link repair protein SNM1A interacts with PIAS1 in nuclear focus formation.</title>
        <authorList>
            <person name="Ishiai M."/>
            <person name="Kimura M."/>
            <person name="Namikoshi K."/>
            <person name="Yamazoe M."/>
            <person name="Yamamoto K."/>
            <person name="Arakawa H."/>
            <person name="Agematsu K."/>
            <person name="Matsushita N."/>
            <person name="Takeda S."/>
            <person name="Buerstedde J.-M."/>
            <person name="Takata M."/>
        </authorList>
    </citation>
    <scope>SUBCELLULAR LOCATION</scope>
    <scope>INTERACTION WITH PIAS1</scope>
    <scope>MUTAGENESIS OF ASP-838 AND HIS-994</scope>
</reference>
<reference key="11">
    <citation type="journal article" date="2008" name="Proc. Natl. Acad. Sci. U.S.A.">
        <title>A quantitative atlas of mitotic phosphorylation.</title>
        <authorList>
            <person name="Dephoure N."/>
            <person name="Zhou C."/>
            <person name="Villen J."/>
            <person name="Beausoleil S.A."/>
            <person name="Bakalarski C.E."/>
            <person name="Elledge S.J."/>
            <person name="Gygi S.P."/>
        </authorList>
    </citation>
    <scope>IDENTIFICATION BY MASS SPECTROMETRY [LARGE SCALE ANALYSIS]</scope>
    <source>
        <tissue>Cervix carcinoma</tissue>
    </source>
</reference>
<reference key="12">
    <citation type="journal article" date="2009" name="Anal. Chem.">
        <title>Lys-N and trypsin cover complementary parts of the phosphoproteome in a refined SCX-based approach.</title>
        <authorList>
            <person name="Gauci S."/>
            <person name="Helbig A.O."/>
            <person name="Slijper M."/>
            <person name="Krijgsveld J."/>
            <person name="Heck A.J."/>
            <person name="Mohammed S."/>
        </authorList>
    </citation>
    <scope>IDENTIFICATION BY MASS SPECTROMETRY [LARGE SCALE ANALYSIS]</scope>
</reference>
<reference key="13">
    <citation type="journal article" date="2013" name="J. Proteome Res.">
        <title>Toward a comprehensive characterization of a human cancer cell phosphoproteome.</title>
        <authorList>
            <person name="Zhou H."/>
            <person name="Di Palma S."/>
            <person name="Preisinger C."/>
            <person name="Peng M."/>
            <person name="Polat A.N."/>
            <person name="Heck A.J."/>
            <person name="Mohammed S."/>
        </authorList>
    </citation>
    <scope>IDENTIFICATION BY MASS SPECTROMETRY [LARGE SCALE ANALYSIS]</scope>
    <source>
        <tissue>Erythroleukemia</tissue>
    </source>
</reference>
<reference key="14">
    <citation type="journal article" date="2015" name="Mol. Cell. Proteomics">
        <title>System-wide analysis of SUMOylation dynamics in response to replication stress reveals novel small ubiquitin-like modified target proteins and acceptor lysines relevant for genome stability.</title>
        <authorList>
            <person name="Xiao Z."/>
            <person name="Chang J.G."/>
            <person name="Hendriks I.A."/>
            <person name="Sigurdsson J.O."/>
            <person name="Olsen J.V."/>
            <person name="Vertegaal A.C."/>
        </authorList>
    </citation>
    <scope>SUMOYLATION [LARGE SCALE ANALYSIS] AT LYS-488</scope>
    <scope>IDENTIFICATION BY MASS SPECTROMETRY [LARGE SCALE ANALYSIS]</scope>
</reference>
<reference key="15">
    <citation type="journal article" date="2017" name="Nat. Struct. Mol. Biol.">
        <title>Site-specific mapping of the human SUMO proteome reveals co-modification with phosphorylation.</title>
        <authorList>
            <person name="Hendriks I.A."/>
            <person name="Lyon D."/>
            <person name="Young C."/>
            <person name="Jensen L.J."/>
            <person name="Vertegaal A.C."/>
            <person name="Nielsen M.L."/>
        </authorList>
    </citation>
    <scope>SUMOYLATION [LARGE SCALE ANALYSIS] AT LYS-202; LYS-236; LYS-269; LYS-353; LYS-361; LYS-429; LYS-488; LYS-508; LYS-517; LYS-533; LYS-536; LYS-668; LYS-670 AND LYS-674</scope>
    <scope>IDENTIFICATION BY MASS SPECTROMETRY [LARGE SCALE ANALYSIS]</scope>
</reference>
<reference key="16">
    <citation type="journal article" date="2019" name="Sci. Rep.">
        <title>Human metallo-beta-lactamase enzymes degrade penicillin.</title>
        <authorList>
            <person name="Diene S.M."/>
            <person name="Pinault L."/>
            <person name="Keshri V."/>
            <person name="Armstrong N."/>
            <person name="Khelaifia S."/>
            <person name="Chabriere E."/>
            <person name="Caetano-Anolles G."/>
            <person name="Colson P."/>
            <person name="La Scola B."/>
            <person name="Rolain J.M."/>
            <person name="Pontarotti P."/>
            <person name="Raoult D."/>
        </authorList>
    </citation>
    <scope>FUNCTION</scope>
    <scope>CATALYTIC ACTIVITY</scope>
    <scope>ACTIVITY REGULATION</scope>
</reference>
<name>DCR1A_HUMAN</name>
<evidence type="ECO:0000250" key="1">
    <source>
        <dbReference type="UniProtKB" id="Q9JIC3"/>
    </source>
</evidence>
<evidence type="ECO:0000255" key="2">
    <source>
        <dbReference type="PROSITE-ProRule" id="PRU01256"/>
    </source>
</evidence>
<evidence type="ECO:0000256" key="3">
    <source>
        <dbReference type="SAM" id="MobiDB-lite"/>
    </source>
</evidence>
<evidence type="ECO:0000269" key="4">
    <source>
    </source>
</evidence>
<evidence type="ECO:0000269" key="5">
    <source>
    </source>
</evidence>
<evidence type="ECO:0000269" key="6">
    <source>
    </source>
</evidence>
<evidence type="ECO:0000269" key="7">
    <source>
    </source>
</evidence>
<evidence type="ECO:0000269" key="8">
    <source>
    </source>
</evidence>
<evidence type="ECO:0000269" key="9">
    <source>
    </source>
</evidence>
<evidence type="ECO:0000269" key="10">
    <source>
    </source>
</evidence>
<evidence type="ECO:0000269" key="11">
    <source ref="2"/>
</evidence>
<evidence type="ECO:0000269" key="12">
    <source ref="4"/>
</evidence>
<evidence type="ECO:0000305" key="13"/>
<evidence type="ECO:0007744" key="14">
    <source>
    </source>
</evidence>
<evidence type="ECO:0007744" key="15">
    <source>
    </source>
</evidence>
<evidence type="ECO:0007829" key="16">
    <source>
        <dbReference type="PDB" id="5Q22"/>
    </source>
</evidence>
<evidence type="ECO:0007829" key="17">
    <source>
        <dbReference type="PDB" id="5Q7S"/>
    </source>
</evidence>
<evidence type="ECO:0007829" key="18">
    <source>
        <dbReference type="PDB" id="5Q9Z"/>
    </source>
</evidence>
<gene>
    <name type="primary">DCLRE1A</name>
    <name type="synonym">KIAA0086</name>
    <name type="synonym">SNM1</name>
    <name type="synonym">SNM1A</name>
</gene>
<protein>
    <recommendedName>
        <fullName>DNA cross-link repair 1A protein</fullName>
    </recommendedName>
    <alternativeName>
        <fullName>Beta-lactamase DCLRE1A</fullName>
        <ecNumber evidence="10">3.5.2.6</ecNumber>
    </alternativeName>
    <alternativeName>
        <fullName>SNM1 homolog A</fullName>
        <shortName>hSNM1</shortName>
        <shortName>hSNM1A</shortName>
    </alternativeName>
</protein>